<name>SNW1_HUMAN</name>
<protein>
    <recommendedName>
        <fullName>SNW domain-containing protein 1</fullName>
    </recommendedName>
    <alternativeName>
        <fullName>Nuclear protein SkiP</fullName>
    </alternativeName>
    <alternativeName>
        <fullName evidence="36">Nuclear receptor coactivator NCoA-62</fullName>
    </alternativeName>
    <alternativeName>
        <fullName evidence="33 35">Ski-interacting protein</fullName>
    </alternativeName>
</protein>
<dbReference type="EMBL" id="AF045184">
    <property type="protein sequence ID" value="AAC31697.1"/>
    <property type="molecule type" value="mRNA"/>
</dbReference>
<dbReference type="EMBL" id="U51432">
    <property type="protein sequence ID" value="AAC15912.1"/>
    <property type="molecule type" value="mRNA"/>
</dbReference>
<dbReference type="EMBL" id="BT020060">
    <property type="protein sequence ID" value="AAV38863.1"/>
    <property type="molecule type" value="mRNA"/>
</dbReference>
<dbReference type="EMBL" id="BT020061">
    <property type="protein sequence ID" value="AAV38864.1"/>
    <property type="molecule type" value="mRNA"/>
</dbReference>
<dbReference type="EMBL" id="AK292274">
    <property type="protein sequence ID" value="BAF84963.1"/>
    <property type="molecule type" value="mRNA"/>
</dbReference>
<dbReference type="EMBL" id="AC008372">
    <property type="protein sequence ID" value="AAF23325.1"/>
    <property type="molecule type" value="Genomic_DNA"/>
</dbReference>
<dbReference type="EMBL" id="CH471061">
    <property type="protein sequence ID" value="EAW81308.1"/>
    <property type="molecule type" value="Genomic_DNA"/>
</dbReference>
<dbReference type="EMBL" id="BC040112">
    <property type="protein sequence ID" value="AAH40112.1"/>
    <property type="molecule type" value="mRNA"/>
</dbReference>
<dbReference type="EMBL" id="BC046105">
    <property type="protein sequence ID" value="AAH46105.2"/>
    <property type="molecule type" value="mRNA"/>
</dbReference>
<dbReference type="EMBL" id="BC108903">
    <property type="protein sequence ID" value="AAI08904.1"/>
    <property type="molecule type" value="mRNA"/>
</dbReference>
<dbReference type="EMBL" id="U43960">
    <property type="protein sequence ID" value="AAB48857.1"/>
    <property type="molecule type" value="Genomic_DNA"/>
</dbReference>
<dbReference type="CCDS" id="CCDS9867.1"/>
<dbReference type="RefSeq" id="NP_036377.1">
    <property type="nucleotide sequence ID" value="NM_012245.3"/>
</dbReference>
<dbReference type="RefSeq" id="XP_054231583.1">
    <property type="nucleotide sequence ID" value="XM_054375608.1"/>
</dbReference>
<dbReference type="PDB" id="5MQF">
    <property type="method" value="EM"/>
    <property type="resolution" value="5.90 A"/>
    <property type="chains" value="C=1-536"/>
</dbReference>
<dbReference type="PDB" id="5XJC">
    <property type="method" value="EM"/>
    <property type="resolution" value="3.60 A"/>
    <property type="chains" value="R=1-536"/>
</dbReference>
<dbReference type="PDB" id="5YZG">
    <property type="method" value="EM"/>
    <property type="resolution" value="4.10 A"/>
    <property type="chains" value="R=1-536"/>
</dbReference>
<dbReference type="PDB" id="5Z58">
    <property type="method" value="EM"/>
    <property type="resolution" value="4.90 A"/>
    <property type="chains" value="R=1-536"/>
</dbReference>
<dbReference type="PDB" id="6FF4">
    <property type="method" value="EM"/>
    <property type="resolution" value="16.00 A"/>
    <property type="chains" value="C=1-536"/>
</dbReference>
<dbReference type="PDB" id="6FF7">
    <property type="method" value="EM"/>
    <property type="resolution" value="4.50 A"/>
    <property type="chains" value="C=1-536"/>
</dbReference>
<dbReference type="PDB" id="6ICZ">
    <property type="method" value="EM"/>
    <property type="resolution" value="3.00 A"/>
    <property type="chains" value="R=1-536"/>
</dbReference>
<dbReference type="PDB" id="6ID0">
    <property type="method" value="EM"/>
    <property type="resolution" value="2.90 A"/>
    <property type="chains" value="R=1-536"/>
</dbReference>
<dbReference type="PDB" id="6ID1">
    <property type="method" value="EM"/>
    <property type="resolution" value="2.86 A"/>
    <property type="chains" value="R=1-536"/>
</dbReference>
<dbReference type="PDB" id="6QDV">
    <property type="method" value="EM"/>
    <property type="resolution" value="3.30 A"/>
    <property type="chains" value="K=41-329"/>
</dbReference>
<dbReference type="PDB" id="6ZYM">
    <property type="method" value="EM"/>
    <property type="resolution" value="3.40 A"/>
    <property type="chains" value="C=1-536"/>
</dbReference>
<dbReference type="PDB" id="7A5P">
    <property type="method" value="EM"/>
    <property type="resolution" value="5.00 A"/>
    <property type="chains" value="C=1-536"/>
</dbReference>
<dbReference type="PDB" id="7AAV">
    <property type="method" value="EM"/>
    <property type="resolution" value="4.20 A"/>
    <property type="chains" value="v=1-536"/>
</dbReference>
<dbReference type="PDB" id="7ABF">
    <property type="method" value="EM"/>
    <property type="resolution" value="3.90 A"/>
    <property type="chains" value="v=1-536"/>
</dbReference>
<dbReference type="PDB" id="7ABG">
    <property type="method" value="EM"/>
    <property type="resolution" value="7.80 A"/>
    <property type="chains" value="v=1-536"/>
</dbReference>
<dbReference type="PDB" id="7ABI">
    <property type="method" value="EM"/>
    <property type="resolution" value="8.00 A"/>
    <property type="chains" value="v=1-536"/>
</dbReference>
<dbReference type="PDB" id="7DVQ">
    <property type="method" value="EM"/>
    <property type="resolution" value="2.89 A"/>
    <property type="chains" value="R=1-536"/>
</dbReference>
<dbReference type="PDB" id="7QTT">
    <property type="method" value="EM"/>
    <property type="resolution" value="3.10 A"/>
    <property type="chains" value="Y=1-536"/>
</dbReference>
<dbReference type="PDB" id="7W59">
    <property type="method" value="EM"/>
    <property type="resolution" value="3.60 A"/>
    <property type="chains" value="R=1-536"/>
</dbReference>
<dbReference type="PDB" id="7W5A">
    <property type="method" value="EM"/>
    <property type="resolution" value="3.60 A"/>
    <property type="chains" value="R=1-536"/>
</dbReference>
<dbReference type="PDB" id="7W5B">
    <property type="method" value="EM"/>
    <property type="resolution" value="4.30 A"/>
    <property type="chains" value="R=1-536"/>
</dbReference>
<dbReference type="PDB" id="8C6J">
    <property type="method" value="EM"/>
    <property type="resolution" value="2.80 A"/>
    <property type="chains" value="K=1-536"/>
</dbReference>
<dbReference type="PDB" id="8CH6">
    <property type="method" value="EM"/>
    <property type="resolution" value="5.90 A"/>
    <property type="chains" value="Y=1-536"/>
</dbReference>
<dbReference type="PDB" id="8I0P">
    <property type="method" value="EM"/>
    <property type="resolution" value="3.40 A"/>
    <property type="chains" value="R=1-536"/>
</dbReference>
<dbReference type="PDB" id="8I0R">
    <property type="method" value="EM"/>
    <property type="resolution" value="3.00 A"/>
    <property type="chains" value="R=1-536"/>
</dbReference>
<dbReference type="PDB" id="8I0S">
    <property type="method" value="EM"/>
    <property type="resolution" value="4.20 A"/>
    <property type="chains" value="R=1-536"/>
</dbReference>
<dbReference type="PDB" id="8I0T">
    <property type="method" value="EM"/>
    <property type="resolution" value="3.00 A"/>
    <property type="chains" value="R=1-536"/>
</dbReference>
<dbReference type="PDB" id="8I0U">
    <property type="method" value="EM"/>
    <property type="resolution" value="3.30 A"/>
    <property type="chains" value="R=1-536"/>
</dbReference>
<dbReference type="PDB" id="8I0V">
    <property type="method" value="EM"/>
    <property type="resolution" value="3.00 A"/>
    <property type="chains" value="R=1-536"/>
</dbReference>
<dbReference type="PDB" id="8I0W">
    <property type="method" value="EM"/>
    <property type="resolution" value="3.40 A"/>
    <property type="chains" value="R=1-536"/>
</dbReference>
<dbReference type="PDB" id="8RO2">
    <property type="method" value="EM"/>
    <property type="resolution" value="3.50 A"/>
    <property type="chains" value="R=1-536"/>
</dbReference>
<dbReference type="PDB" id="9FMD">
    <property type="method" value="EM"/>
    <property type="resolution" value="3.30 A"/>
    <property type="chains" value="R=1-536"/>
</dbReference>
<dbReference type="PDBsum" id="5MQF"/>
<dbReference type="PDBsum" id="5XJC"/>
<dbReference type="PDBsum" id="5YZG"/>
<dbReference type="PDBsum" id="5Z58"/>
<dbReference type="PDBsum" id="6FF4"/>
<dbReference type="PDBsum" id="6FF7"/>
<dbReference type="PDBsum" id="6ICZ"/>
<dbReference type="PDBsum" id="6ID0"/>
<dbReference type="PDBsum" id="6ID1"/>
<dbReference type="PDBsum" id="6QDV"/>
<dbReference type="PDBsum" id="6ZYM"/>
<dbReference type="PDBsum" id="7A5P"/>
<dbReference type="PDBsum" id="7AAV"/>
<dbReference type="PDBsum" id="7ABF"/>
<dbReference type="PDBsum" id="7ABG"/>
<dbReference type="PDBsum" id="7ABI"/>
<dbReference type="PDBsum" id="7DVQ"/>
<dbReference type="PDBsum" id="7QTT"/>
<dbReference type="PDBsum" id="7W59"/>
<dbReference type="PDBsum" id="7W5A"/>
<dbReference type="PDBsum" id="7W5B"/>
<dbReference type="PDBsum" id="8C6J"/>
<dbReference type="PDBsum" id="8CH6"/>
<dbReference type="PDBsum" id="8I0P"/>
<dbReference type="PDBsum" id="8I0R"/>
<dbReference type="PDBsum" id="8I0S"/>
<dbReference type="PDBsum" id="8I0T"/>
<dbReference type="PDBsum" id="8I0U"/>
<dbReference type="PDBsum" id="8I0V"/>
<dbReference type="PDBsum" id="8I0W"/>
<dbReference type="PDBsum" id="8RO2"/>
<dbReference type="PDBsum" id="9FMD"/>
<dbReference type="EMDB" id="EMD-11569"/>
<dbReference type="EMDB" id="EMD-11693"/>
<dbReference type="EMDB" id="EMD-11694"/>
<dbReference type="EMDB" id="EMD-11695"/>
<dbReference type="EMDB" id="EMD-11697"/>
<dbReference type="EMDB" id="EMD-14146"/>
<dbReference type="EMDB" id="EMD-16452"/>
<dbReference type="EMDB" id="EMD-16658"/>
<dbReference type="EMDB" id="EMD-19399"/>
<dbReference type="EMDB" id="EMD-30875"/>
<dbReference type="EMDB" id="EMD-32317"/>
<dbReference type="EMDB" id="EMD-32319"/>
<dbReference type="EMDB" id="EMD-32321"/>
<dbReference type="EMDB" id="EMD-35105"/>
<dbReference type="EMDB" id="EMD-35107"/>
<dbReference type="EMDB" id="EMD-35108"/>
<dbReference type="EMDB" id="EMD-35109"/>
<dbReference type="EMDB" id="EMD-35110"/>
<dbReference type="EMDB" id="EMD-35111"/>
<dbReference type="EMDB" id="EMD-35113"/>
<dbReference type="EMDB" id="EMD-3545"/>
<dbReference type="EMDB" id="EMD-4255"/>
<dbReference type="EMDB" id="EMD-4525"/>
<dbReference type="EMDB" id="EMD-6721"/>
<dbReference type="EMDB" id="EMD-6864"/>
<dbReference type="EMDB" id="EMD-6891"/>
<dbReference type="EMDB" id="EMD-9645"/>
<dbReference type="EMDB" id="EMD-9646"/>
<dbReference type="EMDB" id="EMD-9647"/>
<dbReference type="SMR" id="Q13573"/>
<dbReference type="BioGRID" id="116597">
    <property type="interactions" value="778"/>
</dbReference>
<dbReference type="ComplexPortal" id="CPX-2653">
    <property type="entry name" value="SNIP1/SkIP associated RNA-processing complex"/>
</dbReference>
<dbReference type="CORUM" id="Q13573"/>
<dbReference type="DIP" id="DIP-34800N"/>
<dbReference type="FunCoup" id="Q13573">
    <property type="interactions" value="3119"/>
</dbReference>
<dbReference type="IntAct" id="Q13573">
    <property type="interactions" value="777"/>
</dbReference>
<dbReference type="MINT" id="Q13573"/>
<dbReference type="STRING" id="9606.ENSP00000451129"/>
<dbReference type="GlyCosmos" id="Q13573">
    <property type="glycosylation" value="1 site, 1 glycan"/>
</dbReference>
<dbReference type="GlyGen" id="Q13573">
    <property type="glycosylation" value="3 sites, 1 O-linked glycan (3 sites)"/>
</dbReference>
<dbReference type="iPTMnet" id="Q13573"/>
<dbReference type="MetOSite" id="Q13573"/>
<dbReference type="PhosphoSitePlus" id="Q13573"/>
<dbReference type="SwissPalm" id="Q13573"/>
<dbReference type="BioMuta" id="SNW1"/>
<dbReference type="DMDM" id="2500813"/>
<dbReference type="jPOST" id="Q13573"/>
<dbReference type="MassIVE" id="Q13573"/>
<dbReference type="PaxDb" id="9606-ENSP00000261531"/>
<dbReference type="PeptideAtlas" id="Q13573"/>
<dbReference type="ProteomicsDB" id="59577"/>
<dbReference type="Pumba" id="Q13573"/>
<dbReference type="TopDownProteomics" id="Q13573"/>
<dbReference type="Antibodypedia" id="71">
    <property type="antibodies" value="142 antibodies from 31 providers"/>
</dbReference>
<dbReference type="DNASU" id="22938"/>
<dbReference type="Ensembl" id="ENST00000261531.12">
    <property type="protein sequence ID" value="ENSP00000261531.8"/>
    <property type="gene ID" value="ENSG00000100603.14"/>
</dbReference>
<dbReference type="GeneID" id="22938"/>
<dbReference type="KEGG" id="hsa:22938"/>
<dbReference type="MANE-Select" id="ENST00000261531.12">
    <property type="protein sequence ID" value="ENSP00000261531.8"/>
    <property type="RefSeq nucleotide sequence ID" value="NM_012245.3"/>
    <property type="RefSeq protein sequence ID" value="NP_036377.1"/>
</dbReference>
<dbReference type="UCSC" id="uc001xuf.4">
    <property type="organism name" value="human"/>
</dbReference>
<dbReference type="AGR" id="HGNC:16696"/>
<dbReference type="CTD" id="22938"/>
<dbReference type="DisGeNET" id="22938"/>
<dbReference type="GeneCards" id="SNW1"/>
<dbReference type="HGNC" id="HGNC:16696">
    <property type="gene designation" value="SNW1"/>
</dbReference>
<dbReference type="HPA" id="ENSG00000100603">
    <property type="expression patterns" value="Low tissue specificity"/>
</dbReference>
<dbReference type="MIM" id="603055">
    <property type="type" value="gene"/>
</dbReference>
<dbReference type="neXtProt" id="NX_Q13573"/>
<dbReference type="OpenTargets" id="ENSG00000100603"/>
<dbReference type="PharmGKB" id="PA134883977"/>
<dbReference type="VEuPathDB" id="HostDB:ENSG00000100603"/>
<dbReference type="eggNOG" id="KOG2441">
    <property type="taxonomic scope" value="Eukaryota"/>
</dbReference>
<dbReference type="GeneTree" id="ENSGT00390000010423"/>
<dbReference type="HOGENOM" id="CLU_006601_2_2_1"/>
<dbReference type="InParanoid" id="Q13573"/>
<dbReference type="OMA" id="YGQRRGW"/>
<dbReference type="OrthoDB" id="666364at2759"/>
<dbReference type="PAN-GO" id="Q13573">
    <property type="GO annotations" value="0 GO annotations based on evolutionary models"/>
</dbReference>
<dbReference type="PhylomeDB" id="Q13573"/>
<dbReference type="TreeFam" id="TF300782"/>
<dbReference type="PathwayCommons" id="Q13573"/>
<dbReference type="Reactome" id="R-HSA-1912408">
    <property type="pathway name" value="Pre-NOTCH Transcription and Translation"/>
</dbReference>
<dbReference type="Reactome" id="R-HSA-210744">
    <property type="pathway name" value="Regulation of gene expression in late stage (branching morphogenesis) pancreatic bud precursor cells"/>
</dbReference>
<dbReference type="Reactome" id="R-HSA-2122947">
    <property type="pathway name" value="NOTCH1 Intracellular Domain Regulates Transcription"/>
</dbReference>
<dbReference type="Reactome" id="R-HSA-2173795">
    <property type="pathway name" value="Downregulation of SMAD2/3:SMAD4 transcriptional activity"/>
</dbReference>
<dbReference type="Reactome" id="R-HSA-2644606">
    <property type="pathway name" value="Constitutive Signaling by NOTCH1 PEST Domain Mutants"/>
</dbReference>
<dbReference type="Reactome" id="R-HSA-2894862">
    <property type="pathway name" value="Constitutive Signaling by NOTCH1 HD+PEST Domain Mutants"/>
</dbReference>
<dbReference type="Reactome" id="R-HSA-350054">
    <property type="pathway name" value="Notch-HLH transcription pathway"/>
</dbReference>
<dbReference type="Reactome" id="R-HSA-72163">
    <property type="pathway name" value="mRNA Splicing - Major Pathway"/>
</dbReference>
<dbReference type="Reactome" id="R-HSA-8941856">
    <property type="pathway name" value="RUNX3 regulates NOTCH signaling"/>
</dbReference>
<dbReference type="Reactome" id="R-HSA-9013508">
    <property type="pathway name" value="NOTCH3 Intracellular Domain Regulates Transcription"/>
</dbReference>
<dbReference type="Reactome" id="R-HSA-9013695">
    <property type="pathway name" value="NOTCH4 Intracellular Domain Regulates Transcription"/>
</dbReference>
<dbReference type="Reactome" id="R-HSA-9793380">
    <property type="pathway name" value="Formation of paraxial mesoderm"/>
</dbReference>
<dbReference type="SABIO-RK" id="Q13573"/>
<dbReference type="SignaLink" id="Q13573"/>
<dbReference type="SIGNOR" id="Q13573"/>
<dbReference type="BioGRID-ORCS" id="22938">
    <property type="hits" value="806 hits in 1166 CRISPR screens"/>
</dbReference>
<dbReference type="CD-CODE" id="91857CE7">
    <property type="entry name" value="Nucleolus"/>
</dbReference>
<dbReference type="ChiTaRS" id="SNW1">
    <property type="organism name" value="human"/>
</dbReference>
<dbReference type="GeneWiki" id="SNW1"/>
<dbReference type="GenomeRNAi" id="22938"/>
<dbReference type="Pharos" id="Q13573">
    <property type="development level" value="Tbio"/>
</dbReference>
<dbReference type="PRO" id="PR:Q13573"/>
<dbReference type="Proteomes" id="UP000005640">
    <property type="component" value="Chromosome 14"/>
</dbReference>
<dbReference type="RNAct" id="Q13573">
    <property type="molecule type" value="protein"/>
</dbReference>
<dbReference type="Bgee" id="ENSG00000100603">
    <property type="expression patterns" value="Expressed in cervix squamous epithelium and 219 other cell types or tissues"/>
</dbReference>
<dbReference type="ExpressionAtlas" id="Q13573">
    <property type="expression patterns" value="baseline and differential"/>
</dbReference>
<dbReference type="GO" id="GO:0071013">
    <property type="term" value="C:catalytic step 2 spliceosome"/>
    <property type="evidence" value="ECO:0000314"/>
    <property type="project" value="UniProtKB"/>
</dbReference>
<dbReference type="GO" id="GO:0016604">
    <property type="term" value="C:nuclear body"/>
    <property type="evidence" value="ECO:0000314"/>
    <property type="project" value="HPA"/>
</dbReference>
<dbReference type="GO" id="GO:0016363">
    <property type="term" value="C:nuclear matrix"/>
    <property type="evidence" value="ECO:0000314"/>
    <property type="project" value="UniProtKB"/>
</dbReference>
<dbReference type="GO" id="GO:0016607">
    <property type="term" value="C:nuclear speck"/>
    <property type="evidence" value="ECO:0000314"/>
    <property type="project" value="CAFA"/>
</dbReference>
<dbReference type="GO" id="GO:0005654">
    <property type="term" value="C:nucleoplasm"/>
    <property type="evidence" value="ECO:0000314"/>
    <property type="project" value="HPA"/>
</dbReference>
<dbReference type="GO" id="GO:0005634">
    <property type="term" value="C:nucleus"/>
    <property type="evidence" value="ECO:0000314"/>
    <property type="project" value="UniProtKB"/>
</dbReference>
<dbReference type="GO" id="GO:0005681">
    <property type="term" value="C:spliceosomal complex"/>
    <property type="evidence" value="ECO:0000314"/>
    <property type="project" value="UniProtKB"/>
</dbReference>
<dbReference type="GO" id="GO:0071007">
    <property type="term" value="C:U2-type catalytic step 2 spliceosome"/>
    <property type="evidence" value="ECO:0000314"/>
    <property type="project" value="UniProtKB"/>
</dbReference>
<dbReference type="GO" id="GO:0019899">
    <property type="term" value="F:enzyme binding"/>
    <property type="evidence" value="ECO:0000353"/>
    <property type="project" value="CAFA"/>
</dbReference>
<dbReference type="GO" id="GO:0005112">
    <property type="term" value="F:Notch binding"/>
    <property type="evidence" value="ECO:0000353"/>
    <property type="project" value="UniProtKB"/>
</dbReference>
<dbReference type="GO" id="GO:0050681">
    <property type="term" value="F:nuclear androgen receptor binding"/>
    <property type="evidence" value="ECO:0000353"/>
    <property type="project" value="CAFA"/>
</dbReference>
<dbReference type="GO" id="GO:0016922">
    <property type="term" value="F:nuclear receptor binding"/>
    <property type="evidence" value="ECO:0000314"/>
    <property type="project" value="UniProtKB"/>
</dbReference>
<dbReference type="GO" id="GO:0042974">
    <property type="term" value="F:nuclear retinoic acid receptor binding"/>
    <property type="evidence" value="ECO:0000314"/>
    <property type="project" value="UniProtKB"/>
</dbReference>
<dbReference type="GO" id="GO:0042809">
    <property type="term" value="F:nuclear vitamin D receptor binding"/>
    <property type="evidence" value="ECO:0000314"/>
    <property type="project" value="UniProtKB"/>
</dbReference>
<dbReference type="GO" id="GO:0003723">
    <property type="term" value="F:RNA binding"/>
    <property type="evidence" value="ECO:0007005"/>
    <property type="project" value="UniProtKB"/>
</dbReference>
<dbReference type="GO" id="GO:0046332">
    <property type="term" value="F:SMAD binding"/>
    <property type="evidence" value="ECO:0000314"/>
    <property type="project" value="UniProtKB"/>
</dbReference>
<dbReference type="GO" id="GO:0003713">
    <property type="term" value="F:transcription coactivator activity"/>
    <property type="evidence" value="ECO:0000314"/>
    <property type="project" value="UniProtKB"/>
</dbReference>
<dbReference type="GO" id="GO:0003714">
    <property type="term" value="F:transcription corepressor activity"/>
    <property type="evidence" value="ECO:0000314"/>
    <property type="project" value="UniProtKB"/>
</dbReference>
<dbReference type="GO" id="GO:0071300">
    <property type="term" value="P:cellular response to retinoic acid"/>
    <property type="evidence" value="ECO:0000314"/>
    <property type="project" value="UniProtKB"/>
</dbReference>
<dbReference type="GO" id="GO:0042771">
    <property type="term" value="P:intrinsic apoptotic signaling pathway in response to DNA damage by p53 class mediator"/>
    <property type="evidence" value="ECO:0000315"/>
    <property type="project" value="UniProtKB"/>
</dbReference>
<dbReference type="GO" id="GO:0000398">
    <property type="term" value="P:mRNA splicing, via spliceosome"/>
    <property type="evidence" value="ECO:0000314"/>
    <property type="project" value="UniProtKB"/>
</dbReference>
<dbReference type="GO" id="GO:0045892">
    <property type="term" value="P:negative regulation of DNA-templated transcription"/>
    <property type="evidence" value="ECO:0000314"/>
    <property type="project" value="UniProtKB"/>
</dbReference>
<dbReference type="GO" id="GO:0000122">
    <property type="term" value="P:negative regulation of transcription by RNA polymerase II"/>
    <property type="evidence" value="ECO:0000314"/>
    <property type="project" value="UniProtKB"/>
</dbReference>
<dbReference type="GO" id="GO:0043923">
    <property type="term" value="P:positive regulation by host of viral transcription"/>
    <property type="evidence" value="ECO:0000314"/>
    <property type="project" value="UniProtKB"/>
</dbReference>
<dbReference type="GO" id="GO:0048026">
    <property type="term" value="P:positive regulation of mRNA splicing, via spliceosome"/>
    <property type="evidence" value="ECO:0000315"/>
    <property type="project" value="UniProtKB"/>
</dbReference>
<dbReference type="GO" id="GO:0050769">
    <property type="term" value="P:positive regulation of neurogenesis"/>
    <property type="evidence" value="ECO:0000250"/>
    <property type="project" value="UniProtKB"/>
</dbReference>
<dbReference type="GO" id="GO:0045944">
    <property type="term" value="P:positive regulation of transcription by RNA polymerase II"/>
    <property type="evidence" value="ECO:0000314"/>
    <property type="project" value="UniProtKB"/>
</dbReference>
<dbReference type="GO" id="GO:0030511">
    <property type="term" value="P:positive regulation of transforming growth factor beta receptor signaling pathway"/>
    <property type="evidence" value="ECO:0000314"/>
    <property type="project" value="UniProtKB"/>
</dbReference>
<dbReference type="GO" id="GO:0070564">
    <property type="term" value="P:positive regulation of vitamin D receptor signaling pathway"/>
    <property type="evidence" value="ECO:0000314"/>
    <property type="project" value="UniProtKB"/>
</dbReference>
<dbReference type="GO" id="GO:0048385">
    <property type="term" value="P:regulation of retinoic acid receptor signaling pathway"/>
    <property type="evidence" value="ECO:0000314"/>
    <property type="project" value="UniProtKB"/>
</dbReference>
<dbReference type="GO" id="GO:0006357">
    <property type="term" value="P:regulation of transcription by RNA polymerase II"/>
    <property type="evidence" value="ECO:0000304"/>
    <property type="project" value="ProtInc"/>
</dbReference>
<dbReference type="GO" id="GO:0070562">
    <property type="term" value="P:regulation of vitamin D receptor signaling pathway"/>
    <property type="evidence" value="ECO:0000314"/>
    <property type="project" value="UniProtKB"/>
</dbReference>
<dbReference type="GO" id="GO:0048384">
    <property type="term" value="P:retinoic acid receptor signaling pathway"/>
    <property type="evidence" value="ECO:0000314"/>
    <property type="project" value="UniProtKB"/>
</dbReference>
<dbReference type="DisProt" id="DP00608"/>
<dbReference type="InterPro" id="IPR017862">
    <property type="entry name" value="SKI-int_prot_SKIP"/>
</dbReference>
<dbReference type="InterPro" id="IPR004015">
    <property type="entry name" value="SKI-int_prot_SKIP_SNW-dom"/>
</dbReference>
<dbReference type="PANTHER" id="PTHR12096">
    <property type="entry name" value="NUCLEAR PROTEIN SKIP-RELATED"/>
    <property type="match status" value="1"/>
</dbReference>
<dbReference type="Pfam" id="PF02731">
    <property type="entry name" value="SKIP_SNW"/>
    <property type="match status" value="1"/>
</dbReference>
<gene>
    <name type="primary">SNW1</name>
    <name type="synonym">SKIIP</name>
    <name evidence="32 34" type="synonym">SKIP</name>
</gene>
<comment type="function">
    <text evidence="3 5 6 7 9 12 13 14 16 19 20 23 24 25 26 30 38">Involved in pre-mRNA splicing as component of the spliceosome (PubMed:11991638, PubMed:28076346, PubMed:28502770). As a component of the minor spliceosome, involved in the splicing of U12-type introns in pre-mRNAs (Probable). Required for the specific splicing of CDKN1A pre-mRNA; the function probably involves the recruitment of U2AF2 to the mRNA. May recruit PPIL1 to the spliceosome. May be involved in cyclin-D1/CCND1 mRNA stability through the SNARP complex which associates with both the 3'end of the CCND1 gene and its mRNA. Involved in transcriptional regulation. Modulates TGF-beta-mediated transcription via association with SMAD proteins, MYOD1-mediated transcription via association with PABPN1, RB1-mediated transcriptional repression, and retinoid-X receptor (RXR)- and vitamin D receptor (VDR)-dependent gene transcription in a cell line-specific manner probably involving coactivators NCOA1 and GRIP1. Is involved in NOTCH1-mediated transcriptional activation. Binds to multimerized forms of Notch intracellular domain (NICD) and is proposed to recruit transcriptional coactivators such as MAML1 to form an intermediate preactivation complex which associates with DNA-bound CBF-1/RBPJ to form a transcriptional activation complex by releasing SNW1 and redundant NOTCH1 NICD.</text>
</comment>
<comment type="function">
    <text evidence="16 20">(Microbial infection) Is recruited by HIV-1 Tat to Tat:P-TEFb:TAR RNA complexes and is involved in Tat transcription by recruitment of MYC, MEN1 and TRRAP to the HIV promoter.</text>
</comment>
<comment type="function">
    <text evidence="3">(Microbial infection) Proposed to be involved in transcriptional activation by EBV EBNA2 of CBF-1/RBPJ-repressed promoters.</text>
</comment>
<comment type="subunit">
    <text evidence="1 3 4 5 6 7 9 10 11 12 14 15 16 17 18 19 20 21 22 23 24 25 26 27 28 29 30">Identified in the spliceosome C complex (PubMed:11991638, PubMed:28076346, PubMed:28502770). Associates with U4/U6-U5 tri-small nuclear ribonucleoproteins (U4/U6-U5 tri-snRNPs). Component of the minor spliceosome, which splices U12-type introns (PubMed:33509932). Interacts with SKI, SMAD2,SMAD3, RBPJ, RB1, PABPN1, MAGEA1, SIRT1, FOXN3, U2AF2, DAXX and ATP1B4. Interacts with PPIL1 (PubMed:16595688, PubMed:20007319, PubMed:20368803, PubMed:33220177). Interacts with VDR and RXRA; preferentially associates with VDR:RXRA heterodimers (PubMed:12529369, PubMed:9632709). Interacts with NCOR2 (PubMed:10644367). Interacts with MAML1 (PubMed:21245387). Interacts with NOTCH1 NICD; the interaction involves multimerized NOTCH1 NICD (PubMed:21245387). Forms a complex with NOTCH1 NICD and MAML1; the association is dissociated by RBPJ (PubMed:21245387). Associates with positive transcription elongation factor b (P-TEFb) (PubMed:15905409). Component of the SNARP complex which consists at least of SNIP1, SNW1, THRAP3, BCLAF1 and PNN (PubMed:18794151).</text>
</comment>
<comment type="subunit">
    <text evidence="8">(Microbial infection) Interacts with human papillomavirus type-16 (HPV16) E7 protein.</text>
</comment>
<comment type="subunit">
    <text evidence="3">(Microbial infection) Interacts with EBV EBNA2; EBNA2 competes with NCOR2 for interaction with SNW1.</text>
</comment>
<comment type="interaction">
    <interactant intactId="EBI-632715">
        <id>Q13573</id>
    </interactant>
    <interactant intactId="EBI-11961672">
        <id>O94929-2</id>
        <label>ABLIM3</label>
    </interactant>
    <organismsDiffer>false</organismsDiffer>
    <experiments>3</experiments>
</comment>
<comment type="interaction">
    <interactant intactId="EBI-632715">
        <id>Q13573</id>
    </interactant>
    <interactant intactId="EBI-491169">
        <id>P07550</id>
        <label>ADRB2</label>
    </interactant>
    <organismsDiffer>false</organismsDiffer>
    <experiments>3</experiments>
</comment>
<comment type="interaction">
    <interactant intactId="EBI-632715">
        <id>Q13573</id>
    </interactant>
    <interactant intactId="EBI-4401082">
        <id>Q96BM9</id>
        <label>ARL8A</label>
    </interactant>
    <organismsDiffer>false</organismsDiffer>
    <experiments>2</experiments>
</comment>
<comment type="interaction">
    <interactant intactId="EBI-632715">
        <id>Q13573</id>
    </interactant>
    <interactant intactId="EBI-718376">
        <id>Q9NVJ2</id>
        <label>ARL8B</label>
    </interactant>
    <organismsDiffer>false</organismsDiffer>
    <experiments>5</experiments>
</comment>
<comment type="interaction">
    <interactant intactId="EBI-632715">
        <id>Q13573</id>
    </interactant>
    <interactant intactId="EBI-11975051">
        <id>Q8TD16-2</id>
        <label>BICD2</label>
    </interactant>
    <organismsDiffer>false</organismsDiffer>
    <experiments>3</experiments>
</comment>
<comment type="interaction">
    <interactant intactId="EBI-632715">
        <id>Q13573</id>
    </interactant>
    <interactant intactId="EBI-358049">
        <id>Q13895</id>
        <label>BYSL</label>
    </interactant>
    <organismsDiffer>false</organismsDiffer>
    <experiments>3</experiments>
</comment>
<comment type="interaction">
    <interactant intactId="EBI-632715">
        <id>Q13573</id>
    </interactant>
    <interactant intactId="EBI-747505">
        <id>Q8TAB5</id>
        <label>C1orf216</label>
    </interactant>
    <organismsDiffer>false</organismsDiffer>
    <experiments>3</experiments>
</comment>
<comment type="interaction">
    <interactant intactId="EBI-632715">
        <id>Q13573</id>
    </interactant>
    <interactant intactId="EBI-718729">
        <id>P55212</id>
        <label>CASP6</label>
    </interactant>
    <organismsDiffer>false</organismsDiffer>
    <experiments>3</experiments>
</comment>
<comment type="interaction">
    <interactant intactId="EBI-632715">
        <id>Q13573</id>
    </interactant>
    <interactant intactId="EBI-11977221">
        <id>Q86Z20</id>
        <label>CCDC125</label>
    </interactant>
    <organismsDiffer>false</organismsDiffer>
    <experiments>3</experiments>
</comment>
<comment type="interaction">
    <interactant intactId="EBI-632715">
        <id>Q13573</id>
    </interactant>
    <interactant intactId="EBI-747776">
        <id>Q53EZ4</id>
        <label>CEP55</label>
    </interactant>
    <organismsDiffer>false</organismsDiffer>
    <experiments>3</experiments>
</comment>
<comment type="interaction">
    <interactant intactId="EBI-632715">
        <id>Q13573</id>
    </interactant>
    <interactant intactId="EBI-739624">
        <id>Q8NHQ1</id>
        <label>CEP70</label>
    </interactant>
    <organismsDiffer>false</organismsDiffer>
    <experiments>3</experiments>
</comment>
<comment type="interaction">
    <interactant intactId="EBI-632715">
        <id>Q13573</id>
    </interactant>
    <interactant intactId="EBI-79333">
        <id>P36544</id>
        <label>CHRNA7</label>
    </interactant>
    <organismsDiffer>false</organismsDiffer>
    <experiments>3</experiments>
</comment>
<comment type="interaction">
    <interactant intactId="EBI-632715">
        <id>Q13573</id>
    </interactant>
    <interactant intactId="EBI-16041593">
        <id>O94985-2</id>
        <label>CLSTN1</label>
    </interactant>
    <organismsDiffer>false</organismsDiffer>
    <experiments>3</experiments>
</comment>
<comment type="interaction">
    <interactant intactId="EBI-632715">
        <id>Q13573</id>
    </interactant>
    <interactant intactId="EBI-748128">
        <id>Q8WYA6</id>
        <label>CTNNBL1</label>
    </interactant>
    <organismsDiffer>false</organismsDiffer>
    <experiments>2</experiments>
</comment>
<comment type="interaction">
    <interactant intactId="EBI-632715">
        <id>Q13573</id>
    </interactant>
    <interactant intactId="EBI-5453285">
        <id>Q2TBE0</id>
        <label>CWF19L2</label>
    </interactant>
    <organismsDiffer>false</organismsDiffer>
    <experiments>5</experiments>
</comment>
<comment type="interaction">
    <interactant intactId="EBI-632715">
        <id>Q13573</id>
    </interactant>
    <interactant intactId="EBI-446479">
        <id>P99999</id>
        <label>CYCS</label>
    </interactant>
    <organismsDiffer>false</organismsDiffer>
    <experiments>3</experiments>
</comment>
<comment type="interaction">
    <interactant intactId="EBI-632715">
        <id>Q13573</id>
    </interactant>
    <interactant intactId="EBI-10976677">
        <id>G5E9A7</id>
        <label>DMWD</label>
    </interactant>
    <organismsDiffer>false</organismsDiffer>
    <experiments>3</experiments>
</comment>
<comment type="interaction">
    <interactant intactId="EBI-632715">
        <id>Q13573</id>
    </interactant>
    <interactant intactId="EBI-1183307">
        <id>P19447</id>
        <label>ERCC3</label>
    </interactant>
    <organismsDiffer>false</organismsDiffer>
    <experiments>3</experiments>
</comment>
<comment type="interaction">
    <interactant intactId="EBI-632715">
        <id>Q13573</id>
    </interactant>
    <interactant intactId="EBI-371876">
        <id>Q9NQT4</id>
        <label>EXOSC5</label>
    </interactant>
    <organismsDiffer>false</organismsDiffer>
    <experiments>4</experiments>
</comment>
<comment type="interaction">
    <interactant intactId="EBI-632715">
        <id>Q13573</id>
    </interactant>
    <interactant intactId="EBI-6658203">
        <id>Q86YD7</id>
        <label>FAM90A1</label>
    </interactant>
    <organismsDiffer>false</organismsDiffer>
    <experiments>3</experiments>
</comment>
<comment type="interaction">
    <interactant intactId="EBI-632715">
        <id>Q13573</id>
    </interactant>
    <interactant intactId="EBI-348399">
        <id>P22607</id>
        <label>FGFR3</label>
    </interactant>
    <organismsDiffer>false</organismsDiffer>
    <experiments>3</experiments>
</comment>
<comment type="interaction">
    <interactant intactId="EBI-632715">
        <id>Q13573</id>
    </interactant>
    <interactant intactId="EBI-9641086">
        <id>P21333-2</id>
        <label>FLNA</label>
    </interactant>
    <organismsDiffer>false</organismsDiffer>
    <experiments>3</experiments>
</comment>
<comment type="interaction">
    <interactant intactId="EBI-632715">
        <id>Q13573</id>
    </interactant>
    <interactant intactId="EBI-372721">
        <id>O00409</id>
        <label>FOXN3</label>
    </interactant>
    <organismsDiffer>false</organismsDiffer>
    <experiments>3</experiments>
</comment>
<comment type="interaction">
    <interactant intactId="EBI-632715">
        <id>Q13573</id>
    </interactant>
    <interactant intactId="EBI-618165">
        <id>Q06547</id>
        <label>GABPB1</label>
    </interactant>
    <organismsDiffer>false</organismsDiffer>
    <experiments>3</experiments>
</comment>
<comment type="interaction">
    <interactant intactId="EBI-632715">
        <id>Q13573</id>
    </interactant>
    <interactant intactId="EBI-7960826">
        <id>Q8NHY3</id>
        <label>GAS2L2</label>
    </interactant>
    <organismsDiffer>false</organismsDiffer>
    <experiments>3</experiments>
</comment>
<comment type="interaction">
    <interactant intactId="EBI-632715">
        <id>Q13573</id>
    </interactant>
    <interactant intactId="EBI-744302">
        <id>P14136</id>
        <label>GFAP</label>
    </interactant>
    <organismsDiffer>false</organismsDiffer>
    <experiments>3</experiments>
</comment>
<comment type="interaction">
    <interactant intactId="EBI-632715">
        <id>Q13573</id>
    </interactant>
    <interactant intactId="EBI-618309">
        <id>Q08379</id>
        <label>GOLGA2</label>
    </interactant>
    <organismsDiffer>false</organismsDiffer>
    <experiments>6</experiments>
</comment>
<comment type="interaction">
    <interactant intactId="EBI-632715">
        <id>Q13573</id>
    </interactant>
    <interactant intactId="EBI-8285963">
        <id>Q14957</id>
        <label>GRIN2C</label>
    </interactant>
    <organismsDiffer>false</organismsDiffer>
    <experiments>3</experiments>
</comment>
<comment type="interaction">
    <interactant intactId="EBI-632715">
        <id>Q13573</id>
    </interactant>
    <interactant intactId="EBI-717919">
        <id>Q4V328</id>
        <label>GRIPAP1</label>
    </interactant>
    <organismsDiffer>false</organismsDiffer>
    <experiments>3</experiments>
</comment>
<comment type="interaction">
    <interactant intactId="EBI-632715">
        <id>Q13573</id>
    </interactant>
    <interactant intactId="EBI-473886">
        <id>O00291</id>
        <label>HIP1</label>
    </interactant>
    <organismsDiffer>false</organismsDiffer>
    <experiments>3</experiments>
</comment>
<comment type="interaction">
    <interactant intactId="EBI-632715">
        <id>Q13573</id>
    </interactant>
    <interactant intactId="EBI-8561769">
        <id>Q5SUL5</id>
        <label>HLA-A</label>
    </interactant>
    <organismsDiffer>false</organismsDiffer>
    <experiments>3</experiments>
</comment>
<comment type="interaction">
    <interactant intactId="EBI-632715">
        <id>Q13573</id>
    </interactant>
    <interactant intactId="EBI-2549423">
        <id>Q6NT76</id>
        <label>HMBOX1</label>
    </interactant>
    <organismsDiffer>false</organismsDiffer>
    <experiments>3</experiments>
</comment>
<comment type="interaction">
    <interactant intactId="EBI-632715">
        <id>Q13573</id>
    </interactant>
    <interactant intactId="EBI-712096">
        <id>P30519</id>
        <label>HMOX2</label>
    </interactant>
    <organismsDiffer>false</organismsDiffer>
    <experiments>3</experiments>
</comment>
<comment type="interaction">
    <interactant intactId="EBI-632715">
        <id>Q13573</id>
    </interactant>
    <interactant intactId="EBI-10961706">
        <id>Q96ED9-2</id>
        <label>HOOK2</label>
    </interactant>
    <organismsDiffer>false</organismsDiffer>
    <experiments>3</experiments>
</comment>
<comment type="interaction">
    <interactant intactId="EBI-632715">
        <id>Q13573</id>
    </interactant>
    <interactant intactId="EBI-350145">
        <id>P01112</id>
        <label>HRAS</label>
    </interactant>
    <organismsDiffer>false</organismsDiffer>
    <experiments>3</experiments>
</comment>
<comment type="interaction">
    <interactant intactId="EBI-632715">
        <id>Q13573</id>
    </interactant>
    <interactant intactId="EBI-7116203">
        <id>O75031</id>
        <label>HSF2BP</label>
    </interactant>
    <organismsDiffer>false</organismsDiffer>
    <experiments>3</experiments>
</comment>
<comment type="interaction">
    <interactant intactId="EBI-632715">
        <id>Q13573</id>
    </interactant>
    <interactant intactId="EBI-354921">
        <id>P11021</id>
        <label>HSPA5</label>
    </interactant>
    <organismsDiffer>false</organismsDiffer>
    <experiments>5</experiments>
</comment>
<comment type="interaction">
    <interactant intactId="EBI-632715">
        <id>Q13573</id>
    </interactant>
    <interactant intactId="EBI-352682">
        <id>P04792</id>
        <label>HSPB1</label>
    </interactant>
    <organismsDiffer>false</organismsDiffer>
    <experiments>3</experiments>
</comment>
<comment type="interaction">
    <interactant intactId="EBI-632715">
        <id>Q13573</id>
    </interactant>
    <interactant intactId="EBI-466029">
        <id>P42858</id>
        <label>HTT</label>
    </interactant>
    <organismsDiffer>false</organismsDiffer>
    <experiments>12</experiments>
</comment>
<comment type="interaction">
    <interactant intactId="EBI-632715">
        <id>Q13573</id>
    </interactant>
    <interactant intactId="EBI-81279">
        <id>Q9Y6K9</id>
        <label>IKBKG</label>
    </interactant>
    <organismsDiffer>false</organismsDiffer>
    <experiments>4</experiments>
</comment>
<comment type="interaction">
    <interactant intactId="EBI-632715">
        <id>Q13573</id>
    </interactant>
    <interactant intactId="EBI-745305">
        <id>Q13422</id>
        <label>IKZF1</label>
    </interactant>
    <organismsDiffer>false</organismsDiffer>
    <experiments>3</experiments>
</comment>
<comment type="interaction">
    <interactant intactId="EBI-632715">
        <id>Q13573</id>
    </interactant>
    <interactant intactId="EBI-1055254">
        <id>Q8WXH2</id>
        <label>JPH3</label>
    </interactant>
    <organismsDiffer>false</organismsDiffer>
    <experiments>3</experiments>
</comment>
<comment type="interaction">
    <interactant intactId="EBI-632715">
        <id>Q13573</id>
    </interactant>
    <interactant intactId="EBI-2556193">
        <id>Q63ZY3</id>
        <label>KANK2</label>
    </interactant>
    <organismsDiffer>false</organismsDiffer>
    <experiments>3</experiments>
</comment>
<comment type="interaction">
    <interactant intactId="EBI-632715">
        <id>Q13573</id>
    </interactant>
    <interactant intactId="EBI-399080">
        <id>Q92993</id>
        <label>KAT5</label>
    </interactant>
    <organismsDiffer>false</organismsDiffer>
    <experiments>3</experiments>
</comment>
<comment type="interaction">
    <interactant intactId="EBI-632715">
        <id>Q13573</id>
    </interactant>
    <interactant intactId="EBI-10975473">
        <id>O60333-2</id>
        <label>KIF1B</label>
    </interactant>
    <organismsDiffer>false</organismsDiffer>
    <experiments>3</experiments>
</comment>
<comment type="interaction">
    <interactant intactId="EBI-632715">
        <id>Q13573</id>
    </interactant>
    <interactant intactId="EBI-10171697">
        <id>Q6A162</id>
        <label>KRT40</label>
    </interactant>
    <organismsDiffer>false</organismsDiffer>
    <experiments>3</experiments>
</comment>
<comment type="interaction">
    <interactant intactId="EBI-632715">
        <id>Q13573</id>
    </interactant>
    <interactant intactId="EBI-351935">
        <id>P02545</id>
        <label>LMNA</label>
    </interactant>
    <organismsDiffer>false</organismsDiffer>
    <experiments>4</experiments>
</comment>
<comment type="interaction">
    <interactant intactId="EBI-632715">
        <id>Q13573</id>
    </interactant>
    <interactant intactId="EBI-11742507">
        <id>Q8TAP4-4</id>
        <label>LMO3</label>
    </interactant>
    <organismsDiffer>false</organismsDiffer>
    <experiments>3</experiments>
</comment>
<comment type="interaction">
    <interactant intactId="EBI-632715">
        <id>Q13573</id>
    </interactant>
    <interactant intactId="EBI-741037">
        <id>Q9BRK4</id>
        <label>LZTS2</label>
    </interactant>
    <organismsDiffer>false</organismsDiffer>
    <experiments>3</experiments>
</comment>
<comment type="interaction">
    <interactant intactId="EBI-632715">
        <id>Q13573</id>
    </interactant>
    <interactant intactId="EBI-740978">
        <id>P43355</id>
        <label>MAGEA1</label>
    </interactant>
    <organismsDiffer>false</organismsDiffer>
    <experiments>3</experiments>
</comment>
<comment type="interaction">
    <interactant intactId="EBI-632715">
        <id>Q13573</id>
    </interactant>
    <interactant intactId="EBI-746778">
        <id>Q96A72</id>
        <label>MAGOHB</label>
    </interactant>
    <organismsDiffer>false</organismsDiffer>
    <experiments>3</experiments>
</comment>
<comment type="interaction">
    <interactant intactId="EBI-632715">
        <id>Q13573</id>
    </interactant>
    <interactant intactId="EBI-1050743">
        <id>P31153</id>
        <label>MAT2A</label>
    </interactant>
    <organismsDiffer>false</organismsDiffer>
    <experiments>3</experiments>
</comment>
<comment type="interaction">
    <interactant intactId="EBI-632715">
        <id>Q13573</id>
    </interactant>
    <interactant intactId="EBI-9384556">
        <id>Q9BTE3-2</id>
        <label>MCMBP</label>
    </interactant>
    <organismsDiffer>false</organismsDiffer>
    <experiments>3</experiments>
</comment>
<comment type="interaction">
    <interactant intactId="EBI-632715">
        <id>Q13573</id>
    </interactant>
    <interactant intactId="EBI-2555085">
        <id>Q8IVT2</id>
        <label>MISP</label>
    </interactant>
    <organismsDiffer>false</organismsDiffer>
    <experiments>3</experiments>
</comment>
<comment type="interaction">
    <interactant intactId="EBI-632715">
        <id>Q13573</id>
    </interactant>
    <interactant intactId="EBI-742948">
        <id>Q5JR59</id>
        <label>MTUS2</label>
    </interactant>
    <organismsDiffer>false</organismsDiffer>
    <experiments>3</experiments>
</comment>
<comment type="interaction">
    <interactant intactId="EBI-632715">
        <id>Q13573</id>
    </interactant>
    <interactant intactId="EBI-11522433">
        <id>Q5JR59-3</id>
        <label>MTUS2</label>
    </interactant>
    <organismsDiffer>false</organismsDiffer>
    <experiments>3</experiments>
</comment>
<comment type="interaction">
    <interactant intactId="EBI-632715">
        <id>Q13573</id>
    </interactant>
    <interactant intactId="EBI-713635">
        <id>O43639</id>
        <label>NCK2</label>
    </interactant>
    <organismsDiffer>false</organismsDiffer>
    <experiments>3</experiments>
</comment>
<comment type="interaction">
    <interactant intactId="EBI-632715">
        <id>Q13573</id>
    </interactant>
    <interactant intactId="EBI-80830">
        <id>Q9Y618</id>
        <label>NCOR2</label>
    </interactant>
    <organismsDiffer>false</organismsDiffer>
    <experiments>4</experiments>
</comment>
<comment type="interaction">
    <interactant intactId="EBI-632715">
        <id>Q13573</id>
    </interactant>
    <interactant intactId="EBI-475646">
        <id>P07196</id>
        <label>NEFL</label>
    </interactant>
    <organismsDiffer>false</organismsDiffer>
    <experiments>3</experiments>
</comment>
<comment type="interaction">
    <interactant intactId="EBI-632715">
        <id>Q13573</id>
    </interactant>
    <interactant intactId="EBI-1014472">
        <id>P35240</id>
        <label>NF2</label>
    </interactant>
    <organismsDiffer>false</organismsDiffer>
    <experiments>3</experiments>
</comment>
<comment type="interaction">
    <interactant intactId="EBI-632715">
        <id>Q13573</id>
    </interactant>
    <interactant intactId="EBI-636374">
        <id>P46531</id>
        <label>NOTCH1</label>
    </interactant>
    <organismsDiffer>false</organismsDiffer>
    <experiments>3</experiments>
</comment>
<comment type="interaction">
    <interactant intactId="EBI-632715">
        <id>Q13573</id>
    </interactant>
    <interactant intactId="EBI-398874">
        <id>Q9UBU9</id>
        <label>NXF1</label>
    </interactant>
    <organismsDiffer>false</organismsDiffer>
    <experiments>3</experiments>
</comment>
<comment type="interaction">
    <interactant intactId="EBI-632715">
        <id>Q13573</id>
    </interactant>
    <interactant intactId="EBI-9090919">
        <id>Q5BJF6-2</id>
        <label>ODF2</label>
    </interactant>
    <organismsDiffer>false</organismsDiffer>
    <experiments>3</experiments>
</comment>
<comment type="interaction">
    <interactant intactId="EBI-632715">
        <id>Q13573</id>
    </interactant>
    <interactant intactId="EBI-748974">
        <id>Q96CV9</id>
        <label>OPTN</label>
    </interactant>
    <organismsDiffer>false</organismsDiffer>
    <experiments>3</experiments>
</comment>
<comment type="interaction">
    <interactant intactId="EBI-632715">
        <id>Q13573</id>
    </interactant>
    <interactant intactId="EBI-1226435">
        <id>Q86U42</id>
        <label>PABPN1</label>
    </interactant>
    <organismsDiffer>false</organismsDiffer>
    <experiments>5</experiments>
</comment>
<comment type="interaction">
    <interactant intactId="EBI-632715">
        <id>Q13573</id>
    </interactant>
    <interactant intactId="EBI-79165">
        <id>Q9NRD5</id>
        <label>PICK1</label>
    </interactant>
    <organismsDiffer>false</organismsDiffer>
    <experiments>3</experiments>
</comment>
<comment type="interaction">
    <interactant intactId="EBI-632715">
        <id>Q13573</id>
    </interactant>
    <interactant intactId="EBI-681904">
        <id>Q9H307</id>
        <label>PNN</label>
    </interactant>
    <organismsDiffer>false</organismsDiffer>
    <experiments>3</experiments>
</comment>
<comment type="interaction">
    <interactant intactId="EBI-632715">
        <id>Q13573</id>
    </interactant>
    <interactant intactId="EBI-25884072">
        <id>P62937-2</id>
        <label>PPIA</label>
    </interactant>
    <organismsDiffer>false</organismsDiffer>
    <experiments>3</experiments>
</comment>
<comment type="interaction">
    <interactant intactId="EBI-632715">
        <id>Q13573</id>
    </interactant>
    <interactant intactId="EBI-2557649">
        <id>Q9Y3C6</id>
        <label>PPIL1</label>
    </interactant>
    <organismsDiffer>false</organismsDiffer>
    <experiments>17</experiments>
</comment>
<comment type="interaction">
    <interactant intactId="EBI-632715">
        <id>Q13573</id>
    </interactant>
    <interactant intactId="EBI-2805516">
        <id>P31321</id>
        <label>PRKAR1B</label>
    </interactant>
    <organismsDiffer>false</organismsDiffer>
    <experiments>3</experiments>
</comment>
<comment type="interaction">
    <interactant intactId="EBI-632715">
        <id>Q13573</id>
    </interactant>
    <interactant intactId="EBI-5280197">
        <id>O75400-2</id>
        <label>PRPF40A</label>
    </interactant>
    <organismsDiffer>false</organismsDiffer>
    <experiments>3</experiments>
</comment>
<comment type="interaction">
    <interactant intactId="EBI-632715">
        <id>Q13573</id>
    </interactant>
    <interactant intactId="EBI-752074">
        <id>P41219</id>
        <label>PRPH</label>
    </interactant>
    <organismsDiffer>false</organismsDiffer>
    <experiments>3</experiments>
</comment>
<comment type="interaction">
    <interactant intactId="EBI-632715">
        <id>Q13573</id>
    </interactant>
    <interactant intactId="EBI-447043">
        <id>Q15276</id>
        <label>RABEP1</label>
    </interactant>
    <organismsDiffer>false</organismsDiffer>
    <experiments>3</experiments>
</comment>
<comment type="interaction">
    <interactant intactId="EBI-632715">
        <id>Q13573</id>
    </interactant>
    <interactant intactId="EBI-286642">
        <id>P62826</id>
        <label>RAN</label>
    </interactant>
    <organismsDiffer>false</organismsDiffer>
    <experiments>3</experiments>
</comment>
<comment type="interaction">
    <interactant intactId="EBI-632715">
        <id>Q13573</id>
    </interactant>
    <interactant intactId="EBI-632552">
        <id>Q06330</id>
        <label>RBPJ</label>
    </interactant>
    <organismsDiffer>false</organismsDiffer>
    <experiments>2</experiments>
</comment>
<comment type="interaction">
    <interactant intactId="EBI-632715">
        <id>Q13573</id>
    </interactant>
    <interactant intactId="EBI-726876">
        <id>Q6NUQ1</id>
        <label>RINT1</label>
    </interactant>
    <organismsDiffer>false</organismsDiffer>
    <experiments>7</experiments>
</comment>
<comment type="interaction">
    <interactant intactId="EBI-632715">
        <id>Q13573</id>
    </interactant>
    <interactant intactId="EBI-396669">
        <id>Q9Y3C5</id>
        <label>RNF11</label>
    </interactant>
    <organismsDiffer>false</organismsDiffer>
    <experiments>3</experiments>
</comment>
<comment type="interaction">
    <interactant intactId="EBI-632715">
        <id>Q13573</id>
    </interactant>
    <interactant intactId="EBI-607761">
        <id>O43290</id>
        <label>SART1</label>
    </interactant>
    <organismsDiffer>false</organismsDiffer>
    <experiments>3</experiments>
</comment>
<comment type="interaction">
    <interactant intactId="EBI-632715">
        <id>Q13573</id>
    </interactant>
    <interactant intactId="EBI-9090795">
        <id>Q15047-2</id>
        <label>SETDB1</label>
    </interactant>
    <organismsDiffer>false</organismsDiffer>
    <experiments>3</experiments>
</comment>
<comment type="interaction">
    <interactant intactId="EBI-632715">
        <id>Q13573</id>
    </interactant>
    <interactant intactId="EBI-2623095">
        <id>Q9Y371</id>
        <label>SH3GLB1</label>
    </interactant>
    <organismsDiffer>false</organismsDiffer>
    <experiments>3</experiments>
</comment>
<comment type="interaction">
    <interactant intactId="EBI-632715">
        <id>Q13573</id>
    </interactant>
    <interactant intactId="EBI-1802965">
        <id>Q96EB6</id>
        <label>SIRT1</label>
    </interactant>
    <organismsDiffer>false</organismsDiffer>
    <experiments>7</experiments>
</comment>
<comment type="interaction">
    <interactant intactId="EBI-632715">
        <id>Q13573</id>
    </interactant>
    <interactant intactId="EBI-1040141">
        <id>Q15796</id>
        <label>SMAD2</label>
    </interactant>
    <organismsDiffer>false</organismsDiffer>
    <experiments>3</experiments>
</comment>
<comment type="interaction">
    <interactant intactId="EBI-632715">
        <id>Q13573</id>
    </interactant>
    <interactant intactId="EBI-347161">
        <id>P84022</id>
        <label>SMAD3</label>
    </interactant>
    <organismsDiffer>false</organismsDiffer>
    <experiments>5</experiments>
</comment>
<comment type="interaction">
    <interactant intactId="EBI-632715">
        <id>Q13573</id>
    </interactant>
    <interactant intactId="EBI-749336">
        <id>Q8TAD8</id>
        <label>SNIP1</label>
    </interactant>
    <organismsDiffer>false</organismsDiffer>
    <experiments>8</experiments>
</comment>
<comment type="interaction">
    <interactant intactId="EBI-632715">
        <id>Q13573</id>
    </interactant>
    <interactant intactId="EBI-351113">
        <id>Q69YQ0</id>
        <label>SPECC1L</label>
    </interactant>
    <organismsDiffer>false</organismsDiffer>
    <experiments>3</experiments>
</comment>
<comment type="interaction">
    <interactant intactId="EBI-632715">
        <id>Q13573</id>
    </interactant>
    <interactant intactId="EBI-5235340">
        <id>Q7Z699</id>
        <label>SPRED1</label>
    </interactant>
    <organismsDiffer>false</organismsDiffer>
    <experiments>3</experiments>
</comment>
<comment type="interaction">
    <interactant intactId="EBI-632715">
        <id>Q13573</id>
    </interactant>
    <interactant intactId="EBI-2555179">
        <id>Q9NUJ3</id>
        <label>TCP11L1</label>
    </interactant>
    <organismsDiffer>false</organismsDiffer>
    <experiments>3</experiments>
</comment>
<comment type="interaction">
    <interactant intactId="EBI-632715">
        <id>Q13573</id>
    </interactant>
    <interactant intactId="EBI-742397">
        <id>Q8IYF3</id>
        <label>TEX11</label>
    </interactant>
    <organismsDiffer>false</organismsDiffer>
    <experiments>3</experiments>
</comment>
<comment type="interaction">
    <interactant intactId="EBI-632715">
        <id>Q13573</id>
    </interactant>
    <interactant intactId="EBI-1105213">
        <id>Q9UBB9</id>
        <label>TFIP11</label>
    </interactant>
    <organismsDiffer>false</organismsDiffer>
    <experiments>8</experiments>
</comment>
<comment type="interaction">
    <interactant intactId="EBI-632715">
        <id>Q13573</id>
    </interactant>
    <interactant intactId="EBI-352039">
        <id>Q9Y2W1</id>
        <label>THRAP3</label>
    </interactant>
    <organismsDiffer>false</organismsDiffer>
    <experiments>4</experiments>
</comment>
<comment type="interaction">
    <interactant intactId="EBI-632715">
        <id>Q13573</id>
    </interactant>
    <interactant intactId="EBI-2559665">
        <id>Q5JTV8</id>
        <label>TOR1AIP1</label>
    </interactant>
    <organismsDiffer>false</organismsDiffer>
    <experiments>3</experiments>
</comment>
<comment type="interaction">
    <interactant intactId="EBI-632715">
        <id>Q13573</id>
    </interactant>
    <interactant intactId="EBI-359224">
        <id>Q13077</id>
        <label>TRAF1</label>
    </interactant>
    <organismsDiffer>false</organismsDiffer>
    <experiments>3</experiments>
</comment>
<comment type="interaction">
    <interactant intactId="EBI-632715">
        <id>Q13573</id>
    </interactant>
    <interactant intactId="EBI-740098">
        <id>P36406</id>
        <label>TRIM23</label>
    </interactant>
    <organismsDiffer>false</organismsDiffer>
    <experiments>3</experiments>
</comment>
<comment type="interaction">
    <interactant intactId="EBI-632715">
        <id>Q13573</id>
    </interactant>
    <interactant intactId="EBI-742339">
        <id>P26368</id>
        <label>U2AF2</label>
    </interactant>
    <organismsDiffer>false</organismsDiffer>
    <experiments>6</experiments>
</comment>
<comment type="interaction">
    <interactant intactId="EBI-632715">
        <id>Q13573</id>
    </interactant>
    <interactant intactId="EBI-741480">
        <id>Q9UMX0</id>
        <label>UBQLN1</label>
    </interactant>
    <organismsDiffer>false</organismsDiffer>
    <experiments>3</experiments>
</comment>
<comment type="interaction">
    <interactant intactId="EBI-632715">
        <id>Q13573</id>
    </interactant>
    <interactant intactId="EBI-1051424">
        <id>P22695</id>
        <label>UQCRC2</label>
    </interactant>
    <organismsDiffer>false</organismsDiffer>
    <experiments>3</experiments>
</comment>
<comment type="interaction">
    <interactant intactId="EBI-632715">
        <id>Q13573</id>
    </interactant>
    <interactant intactId="EBI-1054489">
        <id>P22415</id>
        <label>USF1</label>
    </interactant>
    <organismsDiffer>false</organismsDiffer>
    <experiments>3</experiments>
</comment>
<comment type="interaction">
    <interactant intactId="EBI-632715">
        <id>Q13573</id>
    </interactant>
    <interactant intactId="EBI-286357">
        <id>P11473</id>
        <label>VDR</label>
    </interactant>
    <organismsDiffer>false</organismsDiffer>
    <experiments>5</experiments>
</comment>
<comment type="interaction">
    <interactant intactId="EBI-632715">
        <id>Q13573</id>
    </interactant>
    <interactant intactId="EBI-295232">
        <id>Q9HCS7</id>
        <label>XAB2</label>
    </interactant>
    <organismsDiffer>false</organismsDiffer>
    <experiments>4</experiments>
</comment>
<comment type="interaction">
    <interactant intactId="EBI-632715">
        <id>Q13573</id>
    </interactant>
    <interactant intactId="EBI-359832">
        <id>P61981</id>
        <label>YWHAG</label>
    </interactant>
    <organismsDiffer>false</organismsDiffer>
    <experiments>4</experiments>
</comment>
<comment type="interaction">
    <interactant intactId="EBI-632715">
        <id>Q13573</id>
    </interactant>
    <interactant intactId="EBI-3920997">
        <id>Q96NB3</id>
        <label>ZNF830</label>
    </interactant>
    <organismsDiffer>false</organismsDiffer>
    <experiments>3</experiments>
</comment>
<comment type="interaction">
    <interactant intactId="EBI-632715">
        <id>Q13573</id>
    </interactant>
    <interactant intactId="EBI-25900580">
        <id>Q9Y649</id>
    </interactant>
    <organismsDiffer>false</organismsDiffer>
    <experiments>3</experiments>
</comment>
<comment type="interaction">
    <interactant intactId="EBI-632715">
        <id>Q13573</id>
    </interactant>
    <interactant intactId="EBI-349004">
        <id>Q60974</id>
        <label>Ncor1</label>
    </interactant>
    <organismsDiffer>true</organismsDiffer>
    <experiments>3</experiments>
</comment>
<comment type="interaction">
    <interactant intactId="EBI-632715">
        <id>Q13573</id>
    </interactant>
    <interactant intactId="EBI-30861778">
        <id>A0A0D6GID3</id>
        <label>sifA</label>
    </interactant>
    <organismsDiffer>true</organismsDiffer>
    <experiments>2</experiments>
</comment>
<comment type="interaction">
    <interactant intactId="EBI-632715">
        <id>Q13573</id>
    </interactant>
    <interactant intactId="EBI-6392357">
        <id>P49140</id>
        <label>SKI</label>
    </interactant>
    <organismsDiffer>true</organismsDiffer>
    <experiments>4</experiments>
</comment>
<comment type="interaction">
    <interactant intactId="EBI-632715">
        <id>Q13573</id>
    </interactant>
    <interactant intactId="EBI-6392320">
        <id>P17863</id>
        <label>V-SKI</label>
    </interactant>
    <organismsDiffer>true</organismsDiffer>
    <experiments>4</experiments>
</comment>
<comment type="interaction">
    <interactant intactId="EBI-632715">
        <id>Q13573</id>
    </interactant>
    <interactant intactId="EBI-346797">
        <id>P48281</id>
        <label>Vdr</label>
    </interactant>
    <organismsDiffer>true</organismsDiffer>
    <experiments>2</experiments>
</comment>
<comment type="subcellular location">
    <subcellularLocation>
        <location evidence="9 12 25 26">Nucleus</location>
    </subcellularLocation>
</comment>
<comment type="similarity">
    <text evidence="37">Belongs to the SNW family.</text>
</comment>
<feature type="initiator methionine" description="Removed" evidence="31 43 46 47">
    <location>
        <position position="1"/>
    </location>
</feature>
<feature type="chain" id="PRO_0000084827" description="SNW domain-containing protein 1">
    <location>
        <begin position="2"/>
        <end position="536"/>
    </location>
</feature>
<feature type="region of interest" description="Disordered" evidence="2">
    <location>
        <begin position="1"/>
        <end position="46"/>
    </location>
</feature>
<feature type="region of interest" description="Interaction with PPIL1" evidence="18">
    <location>
        <begin position="59"/>
        <end position="79"/>
    </location>
</feature>
<feature type="region of interest" description="SNW">
    <location>
        <begin position="174"/>
        <end position="339"/>
    </location>
</feature>
<feature type="region of interest" description="Disordered" evidence="2">
    <location>
        <begin position="209"/>
        <end position="233"/>
    </location>
</feature>
<feature type="region of interest" description="Disordered" evidence="2">
    <location>
        <begin position="311"/>
        <end position="386"/>
    </location>
</feature>
<feature type="region of interest" description="Disordered" evidence="2">
    <location>
        <begin position="470"/>
        <end position="536"/>
    </location>
</feature>
<feature type="compositionally biased region" description="Basic and acidic residues" evidence="2">
    <location>
        <begin position="470"/>
        <end position="489"/>
    </location>
</feature>
<feature type="compositionally biased region" description="Basic and acidic residues" evidence="2">
    <location>
        <begin position="503"/>
        <end position="530"/>
    </location>
</feature>
<feature type="modified residue" description="N-acetylalanine" evidence="31 43 46 47">
    <location>
        <position position="2"/>
    </location>
</feature>
<feature type="modified residue" description="Phosphoserine" evidence="48">
    <location>
        <position position="14"/>
    </location>
</feature>
<feature type="modified residue" description="Phosphoserine" evidence="48">
    <location>
        <position position="182"/>
    </location>
</feature>
<feature type="modified residue" description="Phosphoserine" evidence="48">
    <location>
        <position position="190"/>
    </location>
</feature>
<feature type="modified residue" description="Phosphoserine" evidence="42 44 45 48 49">
    <location>
        <position position="224"/>
    </location>
</feature>
<feature type="modified residue" description="Phosphoserine" evidence="42 44 48 49">
    <location>
        <position position="232"/>
    </location>
</feature>
<feature type="modified residue" description="Phosphoserine" evidence="44 45">
    <location>
        <position position="234"/>
    </location>
</feature>
<feature type="modified residue" description="Phosphoserine" evidence="48">
    <location>
        <position position="446"/>
    </location>
</feature>
<feature type="modified residue" description="Phosphoserine" evidence="48">
    <location>
        <position position="479"/>
    </location>
</feature>
<feature type="modified residue" description="Phosphoserine" evidence="48">
    <location>
        <position position="481"/>
    </location>
</feature>
<feature type="cross-link" description="Glycyl lysine isopeptide (Lys-Gly) (interchain with G-Cter in SUMO2)" evidence="52">
    <location>
        <position position="23"/>
    </location>
</feature>
<feature type="cross-link" description="Glycyl lysine isopeptide (Lys-Gly) (interchain with G-Cter in SUMO2)" evidence="50 52">
    <location>
        <position position="81"/>
    </location>
</feature>
<feature type="cross-link" description="Glycyl lysine isopeptide (Lys-Gly) (interchain with G-Cter in SUMO2)" evidence="51">
    <location>
        <position position="97"/>
    </location>
</feature>
<feature type="cross-link" description="Glycyl lysine isopeptide (Lys-Gly) (interchain with G-Cter in SUMO2)" evidence="52">
    <location>
        <position position="115"/>
    </location>
</feature>
<feature type="cross-link" description="Glycyl lysine isopeptide (Lys-Gly) (interchain with G-Cter in SUMO2)" evidence="52">
    <location>
        <position position="122"/>
    </location>
</feature>
<feature type="cross-link" description="Glycyl lysine isopeptide (Lys-Gly) (interchain with G-Cter in SUMO2)" evidence="52">
    <location>
        <position position="141"/>
    </location>
</feature>
<feature type="cross-link" description="Glycyl lysine isopeptide (Lys-Gly) (interchain with G-Cter in SUMO2)" evidence="52">
    <location>
        <position position="158"/>
    </location>
</feature>
<feature type="cross-link" description="Glycyl lysine isopeptide (Lys-Gly) (interchain with G-Cter in SUMO2)" evidence="50 51 52">
    <location>
        <position position="170"/>
    </location>
</feature>
<feature type="cross-link" description="Glycyl lysine isopeptide (Lys-Gly) (interchain with G-Cter in SUMO2)" evidence="50 51 52">
    <location>
        <position position="193"/>
    </location>
</feature>
<feature type="cross-link" description="Glycyl lysine isopeptide (Lys-Gly) (interchain with G-Cter in SUMO2)" evidence="50 51 52">
    <location>
        <position position="240"/>
    </location>
</feature>
<feature type="cross-link" description="Glycyl lysine isopeptide (Lys-Gly) (interchain with G-Cter in SUMO2)" evidence="52">
    <location>
        <position position="258"/>
    </location>
</feature>
<feature type="cross-link" description="Glycyl lysine isopeptide (Lys-Gly) (interchain with G-Cter in SUMO2)" evidence="52">
    <location>
        <position position="286"/>
    </location>
</feature>
<feature type="cross-link" description="Glycyl lysine isopeptide (Lys-Gly) (interchain with G-Cter in SUMO2)" evidence="52">
    <location>
        <position position="339"/>
    </location>
</feature>
<feature type="cross-link" description="Glycyl lysine isopeptide (Lys-Gly) (interchain with G-Cter in SUMO2)" evidence="52">
    <location>
        <position position="344"/>
    </location>
</feature>
<feature type="cross-link" description="Glycyl lysine isopeptide (Lys-Gly) (interchain with G-Cter in SUMO2)" evidence="52">
    <location>
        <position position="416"/>
    </location>
</feature>
<feature type="cross-link" description="Glycyl lysine isopeptide (Lys-Gly) (interchain with G-Cter in SUMO2)" evidence="52">
    <location>
        <position position="441"/>
    </location>
</feature>
<feature type="cross-link" description="Glycyl lysine isopeptide (Lys-Gly) (interchain with G-Cter in SUMO2)" evidence="52">
    <location>
        <position position="452"/>
    </location>
</feature>
<feature type="cross-link" description="Glycyl lysine isopeptide (Lys-Gly) (interchain with G-Cter in SUMO2)" evidence="51 52">
    <location>
        <position position="509"/>
    </location>
</feature>
<feature type="mutagenesis site" description="Abolishes interaction with PPIL1." evidence="21">
    <original>E</original>
    <variation>A</variation>
    <variation>R</variation>
    <location>
        <position position="66"/>
    </location>
</feature>
<feature type="mutagenesis site" description="Abolishes interaction with PPIL1." evidence="21">
    <original>M</original>
    <variation>A</variation>
    <location>
        <position position="76"/>
    </location>
</feature>
<feature type="turn" evidence="56">
    <location>
        <begin position="53"/>
        <end position="56"/>
    </location>
</feature>
<feature type="strand" evidence="56">
    <location>
        <begin position="57"/>
        <end position="60"/>
    </location>
</feature>
<feature type="strand" evidence="54">
    <location>
        <begin position="73"/>
        <end position="75"/>
    </location>
</feature>
<feature type="strand" evidence="56">
    <location>
        <begin position="92"/>
        <end position="94"/>
    </location>
</feature>
<feature type="turn" evidence="56">
    <location>
        <begin position="98"/>
        <end position="102"/>
    </location>
</feature>
<feature type="strand" evidence="56">
    <location>
        <begin position="104"/>
        <end position="106"/>
    </location>
</feature>
<feature type="turn" evidence="57">
    <location>
        <begin position="107"/>
        <end position="109"/>
    </location>
</feature>
<feature type="helix" evidence="53">
    <location>
        <begin position="111"/>
        <end position="114"/>
    </location>
</feature>
<feature type="helix" evidence="56">
    <location>
        <begin position="116"/>
        <end position="118"/>
    </location>
</feature>
<feature type="strand" evidence="56">
    <location>
        <begin position="130"/>
        <end position="133"/>
    </location>
</feature>
<feature type="helix" evidence="56">
    <location>
        <begin position="137"/>
        <end position="159"/>
    </location>
</feature>
<feature type="turn" evidence="56">
    <location>
        <begin position="160"/>
        <end position="162"/>
    </location>
</feature>
<feature type="strand" evidence="55">
    <location>
        <begin position="163"/>
        <end position="167"/>
    </location>
</feature>
<feature type="strand" evidence="56">
    <location>
        <begin position="175"/>
        <end position="180"/>
    </location>
</feature>
<feature type="turn" evidence="53">
    <location>
        <begin position="182"/>
        <end position="184"/>
    </location>
</feature>
<feature type="strand" evidence="56">
    <location>
        <begin position="186"/>
        <end position="191"/>
    </location>
</feature>
<feature type="strand" evidence="56">
    <location>
        <begin position="195"/>
        <end position="201"/>
    </location>
</feature>
<feature type="helix" evidence="56">
    <location>
        <begin position="239"/>
        <end position="244"/>
    </location>
</feature>
<feature type="helix" evidence="56">
    <location>
        <begin position="264"/>
        <end position="267"/>
    </location>
</feature>
<feature type="turn" evidence="56">
    <location>
        <begin position="272"/>
        <end position="274"/>
    </location>
</feature>
<feature type="helix" evidence="56">
    <location>
        <begin position="283"/>
        <end position="316"/>
    </location>
</feature>
<feature type="strand" evidence="53">
    <location>
        <begin position="328"/>
        <end position="332"/>
    </location>
</feature>
<feature type="helix" evidence="59">
    <location>
        <begin position="353"/>
        <end position="372"/>
    </location>
</feature>
<feature type="helix" evidence="59">
    <location>
        <begin position="378"/>
        <end position="381"/>
    </location>
</feature>
<feature type="strand" evidence="59">
    <location>
        <begin position="384"/>
        <end position="386"/>
    </location>
</feature>
<feature type="helix" evidence="59">
    <location>
        <begin position="389"/>
        <end position="393"/>
    </location>
</feature>
<feature type="turn" evidence="53">
    <location>
        <begin position="409"/>
        <end position="413"/>
    </location>
</feature>
<feature type="turn" evidence="58">
    <location>
        <begin position="421"/>
        <end position="425"/>
    </location>
</feature>
<feature type="helix" evidence="58">
    <location>
        <begin position="455"/>
        <end position="458"/>
    </location>
</feature>
<feature type="helix" evidence="58">
    <location>
        <begin position="463"/>
        <end position="469"/>
    </location>
</feature>
<organism>
    <name type="scientific">Homo sapiens</name>
    <name type="common">Human</name>
    <dbReference type="NCBI Taxonomy" id="9606"/>
    <lineage>
        <taxon>Eukaryota</taxon>
        <taxon>Metazoa</taxon>
        <taxon>Chordata</taxon>
        <taxon>Craniata</taxon>
        <taxon>Vertebrata</taxon>
        <taxon>Euteleostomi</taxon>
        <taxon>Mammalia</taxon>
        <taxon>Eutheria</taxon>
        <taxon>Euarchontoglires</taxon>
        <taxon>Primates</taxon>
        <taxon>Haplorrhini</taxon>
        <taxon>Catarrhini</taxon>
        <taxon>Hominidae</taxon>
        <taxon>Homo</taxon>
    </lineage>
</organism>
<evidence type="ECO:0000250" key="1">
    <source>
        <dbReference type="UniProtKB" id="Q9CSN1"/>
    </source>
</evidence>
<evidence type="ECO:0000256" key="2">
    <source>
        <dbReference type="SAM" id="MobiDB-lite"/>
    </source>
</evidence>
<evidence type="ECO:0000269" key="3">
    <source>
    </source>
</evidence>
<evidence type="ECO:0000269" key="4">
    <source>
    </source>
</evidence>
<evidence type="ECO:0000269" key="5">
    <source>
    </source>
</evidence>
<evidence type="ECO:0000269" key="6">
    <source>
    </source>
</evidence>
<evidence type="ECO:0000269" key="7">
    <source>
    </source>
</evidence>
<evidence type="ECO:0000269" key="8">
    <source>
    </source>
</evidence>
<evidence type="ECO:0000269" key="9">
    <source>
    </source>
</evidence>
<evidence type="ECO:0000269" key="10">
    <source>
    </source>
</evidence>
<evidence type="ECO:0000269" key="11">
    <source>
    </source>
</evidence>
<evidence type="ECO:0000269" key="12">
    <source>
    </source>
</evidence>
<evidence type="ECO:0000269" key="13">
    <source>
    </source>
</evidence>
<evidence type="ECO:0000269" key="14">
    <source>
    </source>
</evidence>
<evidence type="ECO:0000269" key="15">
    <source>
    </source>
</evidence>
<evidence type="ECO:0000269" key="16">
    <source>
    </source>
</evidence>
<evidence type="ECO:0000269" key="17">
    <source>
    </source>
</evidence>
<evidence type="ECO:0000269" key="18">
    <source>
    </source>
</evidence>
<evidence type="ECO:0000269" key="19">
    <source>
    </source>
</evidence>
<evidence type="ECO:0000269" key="20">
    <source>
    </source>
</evidence>
<evidence type="ECO:0000269" key="21">
    <source>
    </source>
</evidence>
<evidence type="ECO:0000269" key="22">
    <source>
    </source>
</evidence>
<evidence type="ECO:0000269" key="23">
    <source>
    </source>
</evidence>
<evidence type="ECO:0000269" key="24">
    <source>
    </source>
</evidence>
<evidence type="ECO:0000269" key="25">
    <source>
    </source>
</evidence>
<evidence type="ECO:0000269" key="26">
    <source>
    </source>
</evidence>
<evidence type="ECO:0000269" key="27">
    <source>
    </source>
</evidence>
<evidence type="ECO:0000269" key="28">
    <source>
    </source>
</evidence>
<evidence type="ECO:0000269" key="29">
    <source>
    </source>
</evidence>
<evidence type="ECO:0000269" key="30">
    <source>
    </source>
</evidence>
<evidence type="ECO:0000269" key="31">
    <source ref="8"/>
</evidence>
<evidence type="ECO:0000303" key="32">
    <source>
    </source>
</evidence>
<evidence type="ECO:0000303" key="33">
    <source>
    </source>
</evidence>
<evidence type="ECO:0000303" key="34">
    <source>
    </source>
</evidence>
<evidence type="ECO:0000303" key="35">
    <source>
    </source>
</evidence>
<evidence type="ECO:0000303" key="36">
    <source>
    </source>
</evidence>
<evidence type="ECO:0000305" key="37"/>
<evidence type="ECO:0000305" key="38">
    <source>
    </source>
</evidence>
<evidence type="ECO:0007744" key="39">
    <source>
        <dbReference type="PDB" id="5MQF"/>
    </source>
</evidence>
<evidence type="ECO:0007744" key="40">
    <source>
        <dbReference type="PDB" id="5XJC"/>
    </source>
</evidence>
<evidence type="ECO:0007744" key="41">
    <source>
        <dbReference type="PDB" id="7DVQ"/>
    </source>
</evidence>
<evidence type="ECO:0007744" key="42">
    <source>
    </source>
</evidence>
<evidence type="ECO:0007744" key="43">
    <source>
    </source>
</evidence>
<evidence type="ECO:0007744" key="44">
    <source>
    </source>
</evidence>
<evidence type="ECO:0007744" key="45">
    <source>
    </source>
</evidence>
<evidence type="ECO:0007744" key="46">
    <source>
    </source>
</evidence>
<evidence type="ECO:0007744" key="47">
    <source>
    </source>
</evidence>
<evidence type="ECO:0007744" key="48">
    <source>
    </source>
</evidence>
<evidence type="ECO:0007744" key="49">
    <source>
    </source>
</evidence>
<evidence type="ECO:0007744" key="50">
    <source>
    </source>
</evidence>
<evidence type="ECO:0007744" key="51">
    <source>
    </source>
</evidence>
<evidence type="ECO:0007744" key="52">
    <source>
    </source>
</evidence>
<evidence type="ECO:0007829" key="53">
    <source>
        <dbReference type="PDB" id="6FF4"/>
    </source>
</evidence>
<evidence type="ECO:0007829" key="54">
    <source>
        <dbReference type="PDB" id="6ICZ"/>
    </source>
</evidence>
<evidence type="ECO:0007829" key="55">
    <source>
        <dbReference type="PDB" id="6ID0"/>
    </source>
</evidence>
<evidence type="ECO:0007829" key="56">
    <source>
        <dbReference type="PDB" id="6ID1"/>
    </source>
</evidence>
<evidence type="ECO:0007829" key="57">
    <source>
        <dbReference type="PDB" id="6ZYM"/>
    </source>
</evidence>
<evidence type="ECO:0007829" key="58">
    <source>
        <dbReference type="PDB" id="7DVQ"/>
    </source>
</evidence>
<evidence type="ECO:0007829" key="59">
    <source>
        <dbReference type="PDB" id="7QTT"/>
    </source>
</evidence>
<proteinExistence type="evidence at protein level"/>
<accession>Q13573</accession>
<accession>A8K8A9</accession>
<accession>Q13483</accession>
<accession>Q32N03</accession>
<accession>Q5D0D6</accession>
<keyword id="KW-0002">3D-structure</keyword>
<keyword id="KW-0007">Acetylation</keyword>
<keyword id="KW-0903">Direct protein sequencing</keyword>
<keyword id="KW-0945">Host-virus interaction</keyword>
<keyword id="KW-1017">Isopeptide bond</keyword>
<keyword id="KW-0507">mRNA processing</keyword>
<keyword id="KW-0508">mRNA splicing</keyword>
<keyword id="KW-0539">Nucleus</keyword>
<keyword id="KW-0597">Phosphoprotein</keyword>
<keyword id="KW-1267">Proteomics identification</keyword>
<keyword id="KW-1185">Reference proteome</keyword>
<keyword id="KW-0747">Spliceosome</keyword>
<keyword id="KW-0804">Transcription</keyword>
<keyword id="KW-0805">Transcription regulation</keyword>
<keyword id="KW-0832">Ubl conjugation</keyword>
<sequence>MALTSFLPAPTQLSQDQLEAEEKARSQRSRQTSLVSSRREPPPYGYRKGWIPRLLEDFGDGGAFPEIHVAQYPLDMGRKKKMSNALAIQVDSEGKIKYDAIARQGQSKDKVIYSKYTDLVPKEVMNADDPDLQRPDEEAIKEITEKTRVALEKSVSQKVAAAMPVRAADKLAPAQYIRYTPSQQGVAFNSGAKQRVIRMVEMQKDPMEPPRFKINKKIPRGPPSPPAPVMHSPSRKMTVKEQQEWKIPPCISNWKNAKGYTIPLDKRLAADGRGLQTVHINENFAKLAEALYIADRKAREAVEMRAQVERKMAQKEKEKHEEKLREMAQKARERRAGIKTHVEKEDGEARERDEIRHDRRKERQHDRNLSRAAPDKRSKLQRNENRDISEVIALGVPNPRTSNEVQYDQRLFNQSKGMDSGFAGGEDEIYNVYDQAWRGGKDMAQSIYRPSKNLDKDMYGDDLEARIKTNRFVPDKEFSGSDRRQRGREGPVQFEEDPFGLDKFLEEAKQHGGSKRPSDSSRPKEHEHEGKKRRKE</sequence>
<reference key="1">
    <citation type="journal article" date="1998" name="J. Biol. Chem.">
        <title>Isolation and characterization of a novel coactivator protein, NCoA-62, involved in vitamin D-mediated transcription.</title>
        <authorList>
            <person name="Baudino T.A."/>
            <person name="Kraichely D.M."/>
            <person name="Jefcoat S.C. Jr."/>
            <person name="Winchester S.K."/>
            <person name="Partridge N.C."/>
            <person name="Macdonald P.N."/>
        </authorList>
    </citation>
    <scope>NUCLEOTIDE SEQUENCE [MRNA]</scope>
    <scope>FUNCTION</scope>
    <scope>INTERACTION WITH VDR</scope>
</reference>
<reference key="2">
    <citation type="journal article" date="1998" name="Oncogene">
        <title>The Ski oncoprotein interacts with Skip, the human homolog of Drosophila Bx42.</title>
        <authorList>
            <person name="Dahl R."/>
            <person name="Wani B."/>
            <person name="Hayman M.J."/>
        </authorList>
    </citation>
    <scope>NUCLEOTIDE SEQUENCE [MRNA]</scope>
    <scope>SUBUNIT</scope>
</reference>
<reference key="3">
    <citation type="submission" date="2004-10" db="EMBL/GenBank/DDBJ databases">
        <title>Cloning of human full-length CDSs in BD Creator(TM) system donor vector.</title>
        <authorList>
            <person name="Kalnine N."/>
            <person name="Chen X."/>
            <person name="Rolfs A."/>
            <person name="Halleck A."/>
            <person name="Hines L."/>
            <person name="Eisenstein S."/>
            <person name="Koundinya M."/>
            <person name="Raphael J."/>
            <person name="Moreira D."/>
            <person name="Kelley T."/>
            <person name="LaBaer J."/>
            <person name="Lin Y."/>
            <person name="Phelan M."/>
            <person name="Farmer A."/>
        </authorList>
    </citation>
    <scope>NUCLEOTIDE SEQUENCE [LARGE SCALE MRNA]</scope>
</reference>
<reference key="4">
    <citation type="journal article" date="2004" name="Nat. Genet.">
        <title>Complete sequencing and characterization of 21,243 full-length human cDNAs.</title>
        <authorList>
            <person name="Ota T."/>
            <person name="Suzuki Y."/>
            <person name="Nishikawa T."/>
            <person name="Otsuki T."/>
            <person name="Sugiyama T."/>
            <person name="Irie R."/>
            <person name="Wakamatsu A."/>
            <person name="Hayashi K."/>
            <person name="Sato H."/>
            <person name="Nagai K."/>
            <person name="Kimura K."/>
            <person name="Makita H."/>
            <person name="Sekine M."/>
            <person name="Obayashi M."/>
            <person name="Nishi T."/>
            <person name="Shibahara T."/>
            <person name="Tanaka T."/>
            <person name="Ishii S."/>
            <person name="Yamamoto J."/>
            <person name="Saito K."/>
            <person name="Kawai Y."/>
            <person name="Isono Y."/>
            <person name="Nakamura Y."/>
            <person name="Nagahari K."/>
            <person name="Murakami K."/>
            <person name="Yasuda T."/>
            <person name="Iwayanagi T."/>
            <person name="Wagatsuma M."/>
            <person name="Shiratori A."/>
            <person name="Sudo H."/>
            <person name="Hosoiri T."/>
            <person name="Kaku Y."/>
            <person name="Kodaira H."/>
            <person name="Kondo H."/>
            <person name="Sugawara M."/>
            <person name="Takahashi M."/>
            <person name="Kanda K."/>
            <person name="Yokoi T."/>
            <person name="Furuya T."/>
            <person name="Kikkawa E."/>
            <person name="Omura Y."/>
            <person name="Abe K."/>
            <person name="Kamihara K."/>
            <person name="Katsuta N."/>
            <person name="Sato K."/>
            <person name="Tanikawa M."/>
            <person name="Yamazaki M."/>
            <person name="Ninomiya K."/>
            <person name="Ishibashi T."/>
            <person name="Yamashita H."/>
            <person name="Murakawa K."/>
            <person name="Fujimori K."/>
            <person name="Tanai H."/>
            <person name="Kimata M."/>
            <person name="Watanabe M."/>
            <person name="Hiraoka S."/>
            <person name="Chiba Y."/>
            <person name="Ishida S."/>
            <person name="Ono Y."/>
            <person name="Takiguchi S."/>
            <person name="Watanabe S."/>
            <person name="Yosida M."/>
            <person name="Hotuta T."/>
            <person name="Kusano J."/>
            <person name="Kanehori K."/>
            <person name="Takahashi-Fujii A."/>
            <person name="Hara H."/>
            <person name="Tanase T.-O."/>
            <person name="Nomura Y."/>
            <person name="Togiya S."/>
            <person name="Komai F."/>
            <person name="Hara R."/>
            <person name="Takeuchi K."/>
            <person name="Arita M."/>
            <person name="Imose N."/>
            <person name="Musashino K."/>
            <person name="Yuuki H."/>
            <person name="Oshima A."/>
            <person name="Sasaki N."/>
            <person name="Aotsuka S."/>
            <person name="Yoshikawa Y."/>
            <person name="Matsunawa H."/>
            <person name="Ichihara T."/>
            <person name="Shiohata N."/>
            <person name="Sano S."/>
            <person name="Moriya S."/>
            <person name="Momiyama H."/>
            <person name="Satoh N."/>
            <person name="Takami S."/>
            <person name="Terashima Y."/>
            <person name="Suzuki O."/>
            <person name="Nakagawa S."/>
            <person name="Senoh A."/>
            <person name="Mizoguchi H."/>
            <person name="Goto Y."/>
            <person name="Shimizu F."/>
            <person name="Wakebe H."/>
            <person name="Hishigaki H."/>
            <person name="Watanabe T."/>
            <person name="Sugiyama A."/>
            <person name="Takemoto M."/>
            <person name="Kawakami B."/>
            <person name="Yamazaki M."/>
            <person name="Watanabe K."/>
            <person name="Kumagai A."/>
            <person name="Itakura S."/>
            <person name="Fukuzumi Y."/>
            <person name="Fujimori Y."/>
            <person name="Komiyama M."/>
            <person name="Tashiro H."/>
            <person name="Tanigami A."/>
            <person name="Fujiwara T."/>
            <person name="Ono T."/>
            <person name="Yamada K."/>
            <person name="Fujii Y."/>
            <person name="Ozaki K."/>
            <person name="Hirao M."/>
            <person name="Ohmori Y."/>
            <person name="Kawabata A."/>
            <person name="Hikiji T."/>
            <person name="Kobatake N."/>
            <person name="Inagaki H."/>
            <person name="Ikema Y."/>
            <person name="Okamoto S."/>
            <person name="Okitani R."/>
            <person name="Kawakami T."/>
            <person name="Noguchi S."/>
            <person name="Itoh T."/>
            <person name="Shigeta K."/>
            <person name="Senba T."/>
            <person name="Matsumura K."/>
            <person name="Nakajima Y."/>
            <person name="Mizuno T."/>
            <person name="Morinaga M."/>
            <person name="Sasaki M."/>
            <person name="Togashi T."/>
            <person name="Oyama M."/>
            <person name="Hata H."/>
            <person name="Watanabe M."/>
            <person name="Komatsu T."/>
            <person name="Mizushima-Sugano J."/>
            <person name="Satoh T."/>
            <person name="Shirai Y."/>
            <person name="Takahashi Y."/>
            <person name="Nakagawa K."/>
            <person name="Okumura K."/>
            <person name="Nagase T."/>
            <person name="Nomura N."/>
            <person name="Kikuchi H."/>
            <person name="Masuho Y."/>
            <person name="Yamashita R."/>
            <person name="Nakai K."/>
            <person name="Yada T."/>
            <person name="Nakamura Y."/>
            <person name="Ohara O."/>
            <person name="Isogai T."/>
            <person name="Sugano S."/>
        </authorList>
    </citation>
    <scope>NUCLEOTIDE SEQUENCE [LARGE SCALE MRNA]</scope>
    <source>
        <tissue>Testis</tissue>
    </source>
</reference>
<reference key="5">
    <citation type="journal article" date="2003" name="Nature">
        <title>The DNA sequence and analysis of human chromosome 14.</title>
        <authorList>
            <person name="Heilig R."/>
            <person name="Eckenberg R."/>
            <person name="Petit J.-L."/>
            <person name="Fonknechten N."/>
            <person name="Da Silva C."/>
            <person name="Cattolico L."/>
            <person name="Levy M."/>
            <person name="Barbe V."/>
            <person name="De Berardinis V."/>
            <person name="Ureta-Vidal A."/>
            <person name="Pelletier E."/>
            <person name="Vico V."/>
            <person name="Anthouard V."/>
            <person name="Rowen L."/>
            <person name="Madan A."/>
            <person name="Qin S."/>
            <person name="Sun H."/>
            <person name="Du H."/>
            <person name="Pepin K."/>
            <person name="Artiguenave F."/>
            <person name="Robert C."/>
            <person name="Cruaud C."/>
            <person name="Bruels T."/>
            <person name="Jaillon O."/>
            <person name="Friedlander L."/>
            <person name="Samson G."/>
            <person name="Brottier P."/>
            <person name="Cure S."/>
            <person name="Segurens B."/>
            <person name="Aniere F."/>
            <person name="Samain S."/>
            <person name="Crespeau H."/>
            <person name="Abbasi N."/>
            <person name="Aiach N."/>
            <person name="Boscus D."/>
            <person name="Dickhoff R."/>
            <person name="Dors M."/>
            <person name="Dubois I."/>
            <person name="Friedman C."/>
            <person name="Gouyvenoux M."/>
            <person name="James R."/>
            <person name="Madan A."/>
            <person name="Mairey-Estrada B."/>
            <person name="Mangenot S."/>
            <person name="Martins N."/>
            <person name="Menard M."/>
            <person name="Oztas S."/>
            <person name="Ratcliffe A."/>
            <person name="Shaffer T."/>
            <person name="Trask B."/>
            <person name="Vacherie B."/>
            <person name="Bellemere C."/>
            <person name="Belser C."/>
            <person name="Besnard-Gonnet M."/>
            <person name="Bartol-Mavel D."/>
            <person name="Boutard M."/>
            <person name="Briez-Silla S."/>
            <person name="Combette S."/>
            <person name="Dufosse-Laurent V."/>
            <person name="Ferron C."/>
            <person name="Lechaplais C."/>
            <person name="Louesse C."/>
            <person name="Muselet D."/>
            <person name="Magdelenat G."/>
            <person name="Pateau E."/>
            <person name="Petit E."/>
            <person name="Sirvain-Trukniewicz P."/>
            <person name="Trybou A."/>
            <person name="Vega-Czarny N."/>
            <person name="Bataille E."/>
            <person name="Bluet E."/>
            <person name="Bordelais I."/>
            <person name="Dubois M."/>
            <person name="Dumont C."/>
            <person name="Guerin T."/>
            <person name="Haffray S."/>
            <person name="Hammadi R."/>
            <person name="Muanga J."/>
            <person name="Pellouin V."/>
            <person name="Robert D."/>
            <person name="Wunderle E."/>
            <person name="Gauguet G."/>
            <person name="Roy A."/>
            <person name="Sainte-Marthe L."/>
            <person name="Verdier J."/>
            <person name="Verdier-Discala C."/>
            <person name="Hillier L.W."/>
            <person name="Fulton L."/>
            <person name="McPherson J."/>
            <person name="Matsuda F."/>
            <person name="Wilson R."/>
            <person name="Scarpelli C."/>
            <person name="Gyapay G."/>
            <person name="Wincker P."/>
            <person name="Saurin W."/>
            <person name="Quetier F."/>
            <person name="Waterston R."/>
            <person name="Hood L."/>
            <person name="Weissenbach J."/>
        </authorList>
    </citation>
    <scope>NUCLEOTIDE SEQUENCE [LARGE SCALE GENOMIC DNA]</scope>
</reference>
<reference key="6">
    <citation type="submission" date="2005-07" db="EMBL/GenBank/DDBJ databases">
        <authorList>
            <person name="Mural R.J."/>
            <person name="Istrail S."/>
            <person name="Sutton G.G."/>
            <person name="Florea L."/>
            <person name="Halpern A.L."/>
            <person name="Mobarry C.M."/>
            <person name="Lippert R."/>
            <person name="Walenz B."/>
            <person name="Shatkay H."/>
            <person name="Dew I."/>
            <person name="Miller J.R."/>
            <person name="Flanigan M.J."/>
            <person name="Edwards N.J."/>
            <person name="Bolanos R."/>
            <person name="Fasulo D."/>
            <person name="Halldorsson B.V."/>
            <person name="Hannenhalli S."/>
            <person name="Turner R."/>
            <person name="Yooseph S."/>
            <person name="Lu F."/>
            <person name="Nusskern D.R."/>
            <person name="Shue B.C."/>
            <person name="Zheng X.H."/>
            <person name="Zhong F."/>
            <person name="Delcher A.L."/>
            <person name="Huson D.H."/>
            <person name="Kravitz S.A."/>
            <person name="Mouchard L."/>
            <person name="Reinert K."/>
            <person name="Remington K.A."/>
            <person name="Clark A.G."/>
            <person name="Waterman M.S."/>
            <person name="Eichler E.E."/>
            <person name="Adams M.D."/>
            <person name="Hunkapiller M.W."/>
            <person name="Myers E.W."/>
            <person name="Venter J.C."/>
        </authorList>
    </citation>
    <scope>NUCLEOTIDE SEQUENCE [LARGE SCALE GENOMIC DNA]</scope>
</reference>
<reference key="7">
    <citation type="journal article" date="2004" name="Genome Res.">
        <title>The status, quality, and expansion of the NIH full-length cDNA project: the Mammalian Gene Collection (MGC).</title>
        <authorList>
            <consortium name="The MGC Project Team"/>
        </authorList>
    </citation>
    <scope>NUCLEOTIDE SEQUENCE [LARGE SCALE MRNA]</scope>
    <source>
        <tissue>Cervix</tissue>
    </source>
</reference>
<reference key="8">
    <citation type="submission" date="2009-06" db="UniProtKB">
        <authorList>
            <person name="Bienvenut W.V."/>
            <person name="Dozynkiewicz M."/>
            <person name="Norman J.C."/>
        </authorList>
    </citation>
    <scope>PROTEIN SEQUENCE OF 2-23; 82-95; 179-193 AND 401-410</scope>
    <scope>CLEAVAGE OF INITIATOR METHIONINE</scope>
    <scope>ACETYLATION AT ALA-2</scope>
    <scope>IDENTIFICATION BY MASS SPECTROMETRY</scope>
    <source>
        <tissue>Ovarian carcinoma</tissue>
    </source>
</reference>
<reference key="9">
    <citation type="journal article" date="1996" name="Gene">
        <title>The homolog of chromatin binding protein Bx42 identified in Dictyostelium.</title>
        <authorList>
            <person name="Folk P."/>
            <person name="Puta F."/>
            <person name="Krpejsova L."/>
            <person name="Blahuskova A."/>
            <person name="Markos A."/>
            <person name="Rabino M."/>
            <person name="Dottin R.P."/>
        </authorList>
    </citation>
    <scope>NUCLEOTIDE SEQUENCE [GENOMIC DNA] OF 282-536</scope>
</reference>
<reference key="10">
    <citation type="journal article" date="2000" name="J. Virol.">
        <title>A role for SKIP in EBNA2 activation of CBF1-repressed promoters.</title>
        <authorList>
            <person name="Zhou S."/>
            <person name="Fujimuro M."/>
            <person name="Hsieh J.J."/>
            <person name="Chen L."/>
            <person name="Hayward S.D."/>
        </authorList>
    </citation>
    <scope>FUNCTION</scope>
    <scope>INTERACTION WITH RBPJ; CIR1; HDAC2 AND EPSTEIN-BARR VIRUS EBNA2 PROTEIN</scope>
</reference>
<reference key="11">
    <citation type="journal article" date="2000" name="Mol. Cell. Biol.">
        <title>SKIP, a CBF1-associated protein, interacts with the ankyrin repeat domain of NotchIC To facilitate NotchIC function.</title>
        <authorList>
            <person name="Zhou S."/>
            <person name="Fujimuro M."/>
            <person name="Hsieh J.J."/>
            <person name="Chen L."/>
            <person name="Miyamoto A."/>
            <person name="Weinmaster G."/>
            <person name="Hayward S.D."/>
        </authorList>
    </citation>
    <scope>INTERACTION WITH NOTCH1</scope>
</reference>
<reference key="12">
    <citation type="journal article" date="2001" name="Hum. Mol. Genet.">
        <title>The product of an oculopharyngeal muscular dystrophy gene, poly(A)-binding protein 2, interacts with SKIP and stimulates muscle-specific gene expression.</title>
        <authorList>
            <person name="Kim Y.-J."/>
            <person name="Noguchi S."/>
            <person name="Hayashi Y.K."/>
            <person name="Tsukahara T."/>
            <person name="Shimizu T."/>
            <person name="Arahata K."/>
        </authorList>
    </citation>
    <scope>FUNCTION</scope>
    <scope>INTERACTION WITH PABPN1</scope>
</reference>
<reference key="13">
    <citation type="journal article" date="2001" name="J. Biol. Chem.">
        <title>Ski-interacting protein interacts with Smad proteins to augment transforming growth factor-beta-dependent transcription.</title>
        <authorList>
            <person name="Leong G.M."/>
            <person name="Subramaniam N."/>
            <person name="Figueroa J."/>
            <person name="Flanagan J.L."/>
            <person name="Hayman M.J."/>
            <person name="Eisman J.A."/>
            <person name="Kouzmenko A.P."/>
        </authorList>
    </citation>
    <scope>FUNCTION</scope>
    <scope>INTERACTION WITH SMAD2 AND SMAD3</scope>
</reference>
<reference key="14">
    <citation type="journal article" date="2001" name="J. Biol. Chem.">
        <title>Ternary complexes and cooperative interplay between NCoA-62/Ski-interacting protein and steroid receptor coactivators in vitamin D receptor-mediated transcription.</title>
        <authorList>
            <person name="Zhang C."/>
            <person name="Baudino T.A."/>
            <person name="Dowd D.R."/>
            <person name="Tokumaru H."/>
            <person name="Wang W."/>
            <person name="MacDonald P.N."/>
        </authorList>
    </citation>
    <scope>FUNCTION</scope>
    <scope>SUBUNIT</scope>
</reference>
<reference key="15">
    <citation type="journal article" date="2001" name="Oncogene">
        <title>The HPV-16 E7 oncoprotein binds Skip and suppresses its transcriptional activity.</title>
        <authorList>
            <person name="Prathapam T."/>
            <person name="Kuhne C."/>
            <person name="Banks L."/>
        </authorList>
    </citation>
    <scope>INTERACTION WITH HPV16 PROTEIN E7</scope>
</reference>
<reference key="16">
    <citation type="journal article" date="2002" name="Nucleic Acids Res.">
        <title>Skip interacts with the retinoblastoma tumor suppressor and inhibits its transcriptional repression activity.</title>
        <authorList>
            <person name="Prathapam T."/>
            <person name="Kuhne C."/>
            <person name="Banks L."/>
        </authorList>
    </citation>
    <scope>INTERACTION WITH RB1</scope>
</reference>
<reference key="17">
    <citation type="journal article" date="2002" name="RNA">
        <title>Purification and characterization of native spliceosomes suitable for three-dimensional structural analysis.</title>
        <authorList>
            <person name="Jurica M.S."/>
            <person name="Licklider L.J."/>
            <person name="Gygi S.P."/>
            <person name="Grigorieff N."/>
            <person name="Moore M.J."/>
        </authorList>
    </citation>
    <scope>IDENTIFICATION BY MASS SPECTROMETRY</scope>
    <scope>IDENTIFICATION IN THE SPLICEOSOMAL C COMPLEX</scope>
    <scope>FUNCTION</scope>
    <scope>SUBCELLULAR LOCATION</scope>
    <scope>SUBUNIT</scope>
</reference>
<reference key="18">
    <citation type="journal article" date="2003" name="J. Biol. Chem.">
        <title>Interactions of SKIP/NCoA-62, TFIIB, and retinoid X receptor with vitamin D receptor helix H10 residues.</title>
        <authorList>
            <person name="Barry J.B."/>
            <person name="Leong G.M."/>
            <person name="Church W.B."/>
            <person name="Issa L.L."/>
            <person name="Eisman J.A."/>
            <person name="Gardiner E.M."/>
        </authorList>
    </citation>
    <scope>INTERACTION WITH VDR</scope>
</reference>
<reference key="19">
    <citation type="journal article" date="2003" name="J. Biol. Chem.">
        <title>Nuclear coactivator-62 kDa/Ski-interacting protein is a nuclear matrix-associated coactivator that may couple vitamin D receptor-mediated transcription and RNA splicing.</title>
        <authorList>
            <person name="Zhang C."/>
            <person name="Dowd D.R."/>
            <person name="Staal A."/>
            <person name="Gu C."/>
            <person name="Lian J.B."/>
            <person name="van Wijnen A.J."/>
            <person name="Stein G.S."/>
            <person name="MacDonald P.N."/>
        </authorList>
    </citation>
    <scope>FUNCTION</scope>
    <scope>SUBUNIT</scope>
    <scope>SUBCELLULAR LOCATION</scope>
</reference>
<reference key="20">
    <citation type="journal article" date="2004" name="Biochem. Biophys. Res. Commun.">
        <title>Ski-interacting protein, a bifunctional nuclear receptor coregulator that interacts with N-CoR/SMRT and p300.</title>
        <authorList>
            <person name="Leong G.M."/>
            <person name="Subramaniam N."/>
            <person name="Issa L.L."/>
            <person name="Barry J.B."/>
            <person name="Kino T."/>
            <person name="Driggers P.H."/>
            <person name="Hayman M.J."/>
            <person name="Eisman J.A."/>
            <person name="Gardiner E.M."/>
        </authorList>
    </citation>
    <scope>FUNCTION</scope>
</reference>
<reference key="21">
    <citation type="journal article" date="2004" name="Nucleic Acids Res.">
        <title>MAGE-A1 interacts with adaptor SKIP and the deacetylase HDAC1 to repress transcription.</title>
        <authorList>
            <person name="Laduron S."/>
            <person name="Deplus R."/>
            <person name="Zhou S."/>
            <person name="Kholmanskikh O."/>
            <person name="Godelaine D."/>
            <person name="De Smet C."/>
            <person name="Hayward S.D."/>
            <person name="Fuks F."/>
            <person name="Boon T."/>
            <person name="De Plaen E."/>
        </authorList>
    </citation>
    <scope>INTERACTION WITH MAGEA1</scope>
</reference>
<reference key="22">
    <citation type="journal article" date="2004" name="Biochem. Biophys. Res. Commun.">
        <title>The human Ski-interacting protein functionally substitutes for the yeast PRP45 gene.</title>
        <authorList>
            <person name="Figueroa J.D."/>
            <person name="Hayman M.J."/>
        </authorList>
    </citation>
    <scope>FUNCTION</scope>
    <scope>SUBUNIT</scope>
</reference>
<reference key="23">
    <citation type="journal article" date="2006" name="Cell">
        <title>Global, in vivo, and site-specific phosphorylation dynamics in signaling networks.</title>
        <authorList>
            <person name="Olsen J.V."/>
            <person name="Blagoev B."/>
            <person name="Gnad F."/>
            <person name="Macek B."/>
            <person name="Kumar C."/>
            <person name="Mortensen P."/>
            <person name="Mann M."/>
        </authorList>
    </citation>
    <scope>IDENTIFICATION BY MASS SPECTROMETRY [LARGE SCALE ANALYSIS]</scope>
    <source>
        <tissue>Cervix carcinoma</tissue>
    </source>
</reference>
<reference key="24">
    <citation type="journal article" date="2006" name="J. Biol. Chem.">
        <title>Solution structure of human peptidyl prolyl isomerase-like protein 1 and insights into its interaction with SKIP.</title>
        <authorList>
            <person name="Xu C."/>
            <person name="Zhang J."/>
            <person name="Huang X."/>
            <person name="Sun J."/>
            <person name="Xu Y."/>
            <person name="Tang Y."/>
            <person name="Wu J."/>
            <person name="Shi Y."/>
            <person name="Huang Q."/>
            <person name="Zhang Q."/>
        </authorList>
    </citation>
    <scope>INTERACTION WITH PPIL1</scope>
</reference>
<reference key="25">
    <citation type="journal article" date="2005" name="Gene">
        <title>CHES1/FOXN3 interacts with Ski-interacting protein and acts as a transcriptional repressor.</title>
        <authorList>
            <person name="Scott K.L."/>
            <person name="Plon S.E."/>
        </authorList>
    </citation>
    <scope>INTERACTION WITH FOXN3</scope>
</reference>
<reference key="26">
    <citation type="journal article" date="2005" name="Genes Dev.">
        <title>A human splicing factor, SKIP, associates with P-TEFb and enhances transcription elongation by HIV-1 Tat.</title>
        <authorList>
            <person name="Bres V."/>
            <person name="Gomes N."/>
            <person name="Pickle L."/>
            <person name="Jones K.A."/>
        </authorList>
    </citation>
    <scope>FUNCTION</scope>
    <scope>SUBUNIT</scope>
</reference>
<reference key="27">
    <citation type="journal article" date="2008" name="Cancer Res.">
        <title>Regulation of cyclin D1 RNA stability by SNIP1.</title>
        <authorList>
            <person name="Bracken C.P."/>
            <person name="Wall S.J."/>
            <person name="Barre B."/>
            <person name="Panov K.I."/>
            <person name="Ajuh P.M."/>
            <person name="Perkins N.D."/>
        </authorList>
    </citation>
    <scope>FUNCTION</scope>
    <scope>IDENTIFICATION IN THE SNARP COMPLEX</scope>
</reference>
<reference key="28">
    <citation type="journal article" date="2008" name="Proc. Natl. Acad. Sci. U.S.A.">
        <title>A quantitative atlas of mitotic phosphorylation.</title>
        <authorList>
            <person name="Dephoure N."/>
            <person name="Zhou C."/>
            <person name="Villen J."/>
            <person name="Beausoleil S.A."/>
            <person name="Bakalarski C.E."/>
            <person name="Elledge S.J."/>
            <person name="Gygi S.P."/>
        </authorList>
    </citation>
    <scope>PHOSPHORYLATION [LARGE SCALE ANALYSIS] AT SER-224 AND SER-232</scope>
    <scope>IDENTIFICATION BY MASS SPECTROMETRY [LARGE SCALE ANALYSIS]</scope>
    <source>
        <tissue>Cervix carcinoma</tissue>
    </source>
</reference>
<reference key="29">
    <citation type="journal article" date="2009" name="Anal. Chem.">
        <title>Lys-N and trypsin cover complementary parts of the phosphoproteome in a refined SCX-based approach.</title>
        <authorList>
            <person name="Gauci S."/>
            <person name="Helbig A.O."/>
            <person name="Slijper M."/>
            <person name="Krijgsveld J."/>
            <person name="Heck A.J."/>
            <person name="Mohammed S."/>
        </authorList>
    </citation>
    <scope>ACETYLATION [LARGE SCALE ANALYSIS] AT ALA-2</scope>
    <scope>CLEAVAGE OF INITIATOR METHIONINE [LARGE SCALE ANALYSIS]</scope>
    <scope>IDENTIFICATION BY MASS SPECTROMETRY [LARGE SCALE ANALYSIS]</scope>
</reference>
<reference key="30">
    <citation type="journal article" date="2009" name="Mol. Cell">
        <title>SKIP interacts with c-Myc and Menin to promote HIV-1 Tat transactivation.</title>
        <authorList>
            <person name="Bres V."/>
            <person name="Yoshida T."/>
            <person name="Pickle L."/>
            <person name="Jones K.A."/>
        </authorList>
    </citation>
    <scope>FUNCTION</scope>
    <scope>SUBUNIT</scope>
</reference>
<reference key="31">
    <citation type="journal article" date="2010" name="J. Biol. Chem.">
        <title>A large intrinsically disordered region in SKIP and its disorder-order transition induced by PPIL1 binding revealed by NMR.</title>
        <authorList>
            <person name="Wang X."/>
            <person name="Zhang S."/>
            <person name="Zhang J."/>
            <person name="Huang X."/>
            <person name="Xu C."/>
            <person name="Wang W."/>
            <person name="Liu Z."/>
            <person name="Wu J."/>
            <person name="Shi Y."/>
        </authorList>
    </citation>
    <scope>INTERACTION WITH PPIL1</scope>
    <scope>MUTAGENESIS OF GLU-66 AND MET-76</scope>
</reference>
<reference key="32">
    <citation type="journal article" date="2010" name="PLoS ONE">
        <title>The crystal structure of PPIL1 bound to cyclosporine A suggests a binding mode for a linear epitope of the SKIP protein.</title>
        <authorList>
            <person name="Stegmann C.M."/>
            <person name="Luhrmann R."/>
            <person name="Wahl M.C."/>
        </authorList>
    </citation>
    <scope>INTERACTION WITH PPIL1</scope>
</reference>
<reference key="33">
    <citation type="journal article" date="2010" name="Sci. Signal.">
        <title>Quantitative phosphoproteomics reveals widespread full phosphorylation site occupancy during mitosis.</title>
        <authorList>
            <person name="Olsen J.V."/>
            <person name="Vermeulen M."/>
            <person name="Santamaria A."/>
            <person name="Kumar C."/>
            <person name="Miller M.L."/>
            <person name="Jensen L.J."/>
            <person name="Gnad F."/>
            <person name="Cox J."/>
            <person name="Jensen T.S."/>
            <person name="Nigg E.A."/>
            <person name="Brunak S."/>
            <person name="Mann M."/>
        </authorList>
    </citation>
    <scope>PHOSPHORYLATION [LARGE SCALE ANALYSIS] AT SER-224; SER-232 AND SER-234</scope>
    <scope>IDENTIFICATION BY MASS SPECTROMETRY [LARGE SCALE ANALYSIS]</scope>
    <source>
        <tissue>Cervix carcinoma</tissue>
    </source>
</reference>
<reference key="34">
    <citation type="journal article" date="2011" name="BMC Syst. Biol.">
        <title>Initial characterization of the human central proteome.</title>
        <authorList>
            <person name="Burkard T.R."/>
            <person name="Planyavsky M."/>
            <person name="Kaupe I."/>
            <person name="Breitwieser F.P."/>
            <person name="Buerckstuemmer T."/>
            <person name="Bennett K.L."/>
            <person name="Superti-Furga G."/>
            <person name="Colinge J."/>
        </authorList>
    </citation>
    <scope>IDENTIFICATION BY MASS SPECTROMETRY [LARGE SCALE ANALYSIS]</scope>
</reference>
<reference key="35">
    <citation type="journal article" date="2011" name="Genes Dev.">
        <title>SKIP counteracts p53-mediated apoptosis via selective regulation of p21Cip1 mRNA splicing.</title>
        <authorList>
            <person name="Chen Y."/>
            <person name="Zhang L."/>
            <person name="Jones K.A."/>
        </authorList>
    </citation>
    <scope>FUNCTION</scope>
    <scope>INTERACTION WITH U2AF2</scope>
</reference>
<reference key="36">
    <citation type="journal article" date="2011" name="Mol. Cell. Biol.">
        <title>Assembly of a Notch transcriptional activation complex requires multimerization.</title>
        <authorList>
            <person name="Vasquez-Del Carpio R."/>
            <person name="Kaplan F.M."/>
            <person name="Weaver K.L."/>
            <person name="VanWye J.D."/>
            <person name="Alves-Guerra M.C."/>
            <person name="Robbins D.J."/>
            <person name="Capobianco A.J."/>
        </authorList>
    </citation>
    <scope>FUNCTION</scope>
    <scope>INTERACTION WITH NOTCH1 AND MAML1</scope>
</reference>
<reference key="37">
    <citation type="journal article" date="2011" name="Sci. Signal.">
        <title>System-wide temporal characterization of the proteome and phosphoproteome of human embryonic stem cell differentiation.</title>
        <authorList>
            <person name="Rigbolt K.T."/>
            <person name="Prokhorova T.A."/>
            <person name="Akimov V."/>
            <person name="Henningsen J."/>
            <person name="Johansen P.T."/>
            <person name="Kratchmarova I."/>
            <person name="Kassem M."/>
            <person name="Mann M."/>
            <person name="Olsen J.V."/>
            <person name="Blagoev B."/>
        </authorList>
    </citation>
    <scope>PHOSPHORYLATION [LARGE SCALE ANALYSIS] AT SER-224 AND SER-234</scope>
    <scope>IDENTIFICATION BY MASS SPECTROMETRY [LARGE SCALE ANALYSIS]</scope>
</reference>
<reference key="38">
    <citation type="journal article" date="2012" name="Mol. Cell. Proteomics">
        <title>Comparative large-scale characterisation of plant vs. mammal proteins reveals similar and idiosyncratic N-alpha acetylation features.</title>
        <authorList>
            <person name="Bienvenut W.V."/>
            <person name="Sumpton D."/>
            <person name="Martinez A."/>
            <person name="Lilla S."/>
            <person name="Espagne C."/>
            <person name="Meinnel T."/>
            <person name="Giglione C."/>
        </authorList>
    </citation>
    <scope>ACETYLATION [LARGE SCALE ANALYSIS] AT ALA-2</scope>
    <scope>CLEAVAGE OF INITIATOR METHIONINE [LARGE SCALE ANALYSIS]</scope>
    <scope>IDENTIFICATION BY MASS SPECTROMETRY [LARGE SCALE ANALYSIS]</scope>
</reference>
<reference key="39">
    <citation type="journal article" date="2012" name="Proc. Natl. Acad. Sci. U.S.A.">
        <title>N-terminal acetylome analyses and functional insights of the N-terminal acetyltransferase NatB.</title>
        <authorList>
            <person name="Van Damme P."/>
            <person name="Lasa M."/>
            <person name="Polevoda B."/>
            <person name="Gazquez C."/>
            <person name="Elosegui-Artola A."/>
            <person name="Kim D.S."/>
            <person name="De Juan-Pardo E."/>
            <person name="Demeyer K."/>
            <person name="Hole K."/>
            <person name="Larrea E."/>
            <person name="Timmerman E."/>
            <person name="Prieto J."/>
            <person name="Arnesen T."/>
            <person name="Sherman F."/>
            <person name="Gevaert K."/>
            <person name="Aldabe R."/>
        </authorList>
    </citation>
    <scope>ACETYLATION [LARGE SCALE ANALYSIS] AT ALA-2</scope>
    <scope>CLEAVAGE OF INITIATOR METHIONINE [LARGE SCALE ANALYSIS]</scope>
    <scope>IDENTIFICATION BY MASS SPECTROMETRY [LARGE SCALE ANALYSIS]</scope>
</reference>
<reference key="40">
    <citation type="journal article" date="2013" name="J. Proteome Res.">
        <title>Toward a comprehensive characterization of a human cancer cell phosphoproteome.</title>
        <authorList>
            <person name="Zhou H."/>
            <person name="Di Palma S."/>
            <person name="Preisinger C."/>
            <person name="Peng M."/>
            <person name="Polat A.N."/>
            <person name="Heck A.J."/>
            <person name="Mohammed S."/>
        </authorList>
    </citation>
    <scope>PHOSPHORYLATION [LARGE SCALE ANALYSIS] AT SER-14; SER-182; SER-190; SER-224; SER-232; SER-446; SER-479 AND SER-481</scope>
    <scope>IDENTIFICATION BY MASS SPECTROMETRY [LARGE SCALE ANALYSIS]</scope>
    <source>
        <tissue>Cervix carcinoma</tissue>
        <tissue>Erythroleukemia</tissue>
    </source>
</reference>
<reference key="41">
    <citation type="journal article" date="2014" name="J. Proteomics">
        <title>An enzyme assisted RP-RPLC approach for in-depth analysis of human liver phosphoproteome.</title>
        <authorList>
            <person name="Bian Y."/>
            <person name="Song C."/>
            <person name="Cheng K."/>
            <person name="Dong M."/>
            <person name="Wang F."/>
            <person name="Huang J."/>
            <person name="Sun D."/>
            <person name="Wang L."/>
            <person name="Ye M."/>
            <person name="Zou H."/>
        </authorList>
    </citation>
    <scope>PHOSPHORYLATION [LARGE SCALE ANALYSIS] AT SER-224 AND SER-232</scope>
    <scope>IDENTIFICATION BY MASS SPECTROMETRY [LARGE SCALE ANALYSIS]</scope>
    <source>
        <tissue>Liver</tissue>
    </source>
</reference>
<reference key="42">
    <citation type="journal article" date="2014" name="Nat. Struct. Mol. Biol.">
        <title>Uncovering global SUMOylation signaling networks in a site-specific manner.</title>
        <authorList>
            <person name="Hendriks I.A."/>
            <person name="D'Souza R.C."/>
            <person name="Yang B."/>
            <person name="Verlaan-de Vries M."/>
            <person name="Mann M."/>
            <person name="Vertegaal A.C."/>
        </authorList>
    </citation>
    <scope>SUMOYLATION [LARGE SCALE ANALYSIS] AT LYS-81; LYS-170; LYS-193 AND LYS-240</scope>
    <scope>IDENTIFICATION BY MASS SPECTROMETRY [LARGE SCALE ANALYSIS]</scope>
</reference>
<reference key="43">
    <citation type="journal article" date="2015" name="Cell Rep.">
        <title>SUMO-2 orchestrates chromatin modifiers in response to DNA damage.</title>
        <authorList>
            <person name="Hendriks I.A."/>
            <person name="Treffers L.W."/>
            <person name="Verlaan-de Vries M."/>
            <person name="Olsen J.V."/>
            <person name="Vertegaal A.C."/>
        </authorList>
    </citation>
    <scope>SUMOYLATION [LARGE SCALE ANALYSIS] AT LYS-97; LYS-170; LYS-193; LYS-240 AND LYS-509</scope>
    <scope>IDENTIFICATION BY MASS SPECTROMETRY [LARGE SCALE ANALYSIS]</scope>
</reference>
<reference key="44">
    <citation type="journal article" date="2017" name="Nat. Struct. Mol. Biol.">
        <title>Site-specific mapping of the human SUMO proteome reveals co-modification with phosphorylation.</title>
        <authorList>
            <person name="Hendriks I.A."/>
            <person name="Lyon D."/>
            <person name="Young C."/>
            <person name="Jensen L.J."/>
            <person name="Vertegaal A.C."/>
            <person name="Nielsen M.L."/>
        </authorList>
    </citation>
    <scope>SUMOYLATION [LARGE SCALE ANALYSIS] AT LYS-23; LYS-81; LYS-115; LYS-122; LYS-141; LYS-158; LYS-170; LYS-193; LYS-240; LYS-258; LYS-286; LYS-339; LYS-344; LYS-416; LYS-441; LYS-452 AND LYS-509</scope>
    <scope>IDENTIFICATION BY MASS SPECTROMETRY [LARGE SCALE ANALYSIS]</scope>
</reference>
<reference key="45">
    <citation type="journal article" date="2021" name="Neuron">
        <title>Mutations in Spliceosomal Genes PPIL1 and PRP17 Cause Neurodegenerative Pontocerebellar Hypoplasia with Microcephaly.</title>
        <authorList>
            <person name="Chai G."/>
            <person name="Webb A."/>
            <person name="Li C."/>
            <person name="Antaki D."/>
            <person name="Lee S."/>
            <person name="Breuss M.W."/>
            <person name="Lang N."/>
            <person name="Stanley V."/>
            <person name="Anzenberg P."/>
            <person name="Yang X."/>
            <person name="Marshall T."/>
            <person name="Gaffney P."/>
            <person name="Wierenga K.J."/>
            <person name="Chung B.H."/>
            <person name="Tsang M.H."/>
            <person name="Pais L.S."/>
            <person name="Lovgren A.K."/>
            <person name="VanNoy G.E."/>
            <person name="Rehm H.L."/>
            <person name="Mirzaa G."/>
            <person name="Leon E."/>
            <person name="Diaz J."/>
            <person name="Neumann A."/>
            <person name="Kalverda A.P."/>
            <person name="Manfield I.W."/>
            <person name="Parry D.A."/>
            <person name="Logan C.V."/>
            <person name="Johnson C.A."/>
            <person name="Bonthron D.T."/>
            <person name="Valleley E.M.A."/>
            <person name="Issa M.Y."/>
            <person name="Abdel-Ghafar S.F."/>
            <person name="Abdel-Hamid M.S."/>
            <person name="Jennings P."/>
            <person name="Zaki M.S."/>
            <person name="Sheridan E."/>
            <person name="Gleeson J.G."/>
        </authorList>
    </citation>
    <scope>INTERACTION WITH PPIL1</scope>
</reference>
<reference evidence="40" key="46">
    <citation type="journal article" date="2017" name="Cell">
        <title>An Atomic Structure of the Human Spliceosome.</title>
        <authorList>
            <person name="Zhang X."/>
            <person name="Yan C."/>
            <person name="Hang J."/>
            <person name="Finci L.I."/>
            <person name="Lei J."/>
            <person name="Shi Y."/>
        </authorList>
    </citation>
    <scope>STRUCTURE BY ELECTRON MICROSCOPY (3.60 ANGSTROMS)</scope>
    <scope>FUNCTION</scope>
    <scope>SUBUNIT</scope>
    <scope>SUBCELLULAR LOCATION</scope>
</reference>
<reference evidence="39" key="47">
    <citation type="journal article" date="2017" name="Nature">
        <title>Cryo-EM structure of a human spliceosome activated for step 2 of splicing.</title>
        <authorList>
            <person name="Bertram K."/>
            <person name="Agafonov D.E."/>
            <person name="Liu W.T."/>
            <person name="Dybkov O."/>
            <person name="Will C.L."/>
            <person name="Hartmuth K."/>
            <person name="Urlaub H."/>
            <person name="Kastner B."/>
            <person name="Stark H."/>
            <person name="Luhrmann R."/>
        </authorList>
    </citation>
    <scope>STRUCTURE BY ELECTRON MICROSCOPY (5.90 ANGSTROMS)</scope>
    <scope>FUNCTION</scope>
    <scope>SUBUNIT</scope>
    <scope>SUBCELLULAR LOCATION</scope>
    <scope>IDENTIFICATION BY MASS SPECTROMETRY</scope>
</reference>
<reference evidence="41" key="48">
    <citation type="journal article" date="2021" name="Science">
        <title>Structure of the activated human minor spliceosome.</title>
        <authorList>
            <person name="Bai R."/>
            <person name="Wan R."/>
            <person name="Wang L."/>
            <person name="Xu K."/>
            <person name="Zhang Q."/>
            <person name="Lei J."/>
            <person name="Shi Y."/>
        </authorList>
    </citation>
    <scope>STRUCTURE BY ELECTRON MICROSCOPY (2.89 ANGSTROMS)</scope>
    <scope>SUBUNIT</scope>
</reference>